<comment type="function">
    <text evidence="16 29 30 43 46">Essential for the degradation of glycogen in lysosomes (PubMed:14695532, PubMed:18429042, PubMed:1856189, PubMed:7717400). Has highest activity on alpha-1,4-linked glycosidic linkages, but can also hydrolyze alpha-1,6-linked glucans (PubMed:29061980).</text>
</comment>
<comment type="catalytic activity">
    <reaction evidence="29 30 43 46">
        <text>Hydrolysis of terminal, non-reducing (1-&gt;4)-linked alpha-D-glucose residues with release of alpha-D-glucose.</text>
        <dbReference type="EC" id="3.2.1.20"/>
    </reaction>
</comment>
<comment type="subcellular location">
    <subcellularLocation>
        <location evidence="27">Lysosome</location>
    </subcellularLocation>
    <subcellularLocation>
        <location evidence="27">Lysosome membrane</location>
    </subcellularLocation>
</comment>
<comment type="PTM">
    <text evidence="44">The different forms of acid glucosidase are obtained by proteolytic processing.</text>
</comment>
<comment type="PTM">
    <text>Phosphorylation of mannose residues ensures efficient transport of the enzyme to the lysosomes via the mannose 6-phosphate receptor.</text>
</comment>
<comment type="polymorphism">
    <text evidence="36 38 42 55 56">There are three common alleles of GAA: GAA*1, GAA*2 and GAA*4. The sequence shown is that of allele GAA*1, which is the most common. Alleles GAA*2 and GAA*4 are much rarer.</text>
</comment>
<comment type="disease" evidence="6 7 8 9 10 11 12 14 15 16 17 18 19 21 22 23 24 25 26 28 29 31 33 34 35 36 39 40 42 45 46 47 48 49 50 51 54 56 57 58 60">
    <disease id="DI-00522">
        <name>Pompe disease</name>
        <acronym>POMPE</acronym>
        <description>An autosomal recessive metabolic disorder with a broad clinical spectrum. The severe infantile form presents at birth with massive accumulation of glycogen in muscle, heart and liver. Cardiomyopathy and muscular hypotonia are the cardinal features of this form whose life expectancy is less than two years. The juvenile and adult forms present as limb-girdle muscular dystrophy beginning in the lower limbs. Final outcome depends on respiratory muscle failure. Patients with the adult form can be free of clinical symptoms for most of their life but finally develop a slowly progressive myopathy.</description>
        <dbReference type="MIM" id="232300"/>
    </disease>
    <text>The disease is caused by variants affecting the gene represented in this entry.</text>
</comment>
<comment type="similarity">
    <text evidence="61">Belongs to the glycosyl hydrolase 31 family.</text>
</comment>
<comment type="online information" name="GAA">
    <link uri="https://medlineplus.gov/genetics/gene/gaa/"/>
    <text>Mutations in alpha-glucosidase</text>
</comment>
<comment type="online information" name="Wikipedia">
    <link uri="https://en.wikipedia.org/wiki/Alpha-glucosidase"/>
    <text>Alpha-glucosidase entry</text>
</comment>
<comment type="online information" name="Glucosidase, alpha, acid (Pompe disease) (GAA)">
    <link uri="https://databases.lovd.nl/shared/genes/GAA"/>
    <text>Leiden Open Variation Database (LOVD)</text>
</comment>
<keyword id="KW-0002">3D-structure</keyword>
<keyword id="KW-0903">Direct protein sequencing</keyword>
<keyword id="KW-0225">Disease variant</keyword>
<keyword id="KW-1015">Disulfide bond</keyword>
<keyword id="KW-0322">Glycogen storage disease</keyword>
<keyword id="KW-0325">Glycoprotein</keyword>
<keyword id="KW-0326">Glycosidase</keyword>
<keyword id="KW-0378">Hydrolase</keyword>
<keyword id="KW-0458">Lysosome</keyword>
<keyword id="KW-0472">Membrane</keyword>
<keyword id="KW-0597">Phosphoprotein</keyword>
<keyword id="KW-1267">Proteomics identification</keyword>
<keyword id="KW-1185">Reference proteome</keyword>
<keyword id="KW-0732">Signal</keyword>
<evidence type="ECO:0000250" key="1"/>
<evidence type="ECO:0000255" key="2"/>
<evidence type="ECO:0000255" key="3">
    <source>
        <dbReference type="PROSITE-ProRule" id="PRU00779"/>
    </source>
</evidence>
<evidence type="ECO:0000255" key="4">
    <source>
        <dbReference type="PROSITE-ProRule" id="PRU10066"/>
    </source>
</evidence>
<evidence type="ECO:0000256" key="5">
    <source>
        <dbReference type="SAM" id="MobiDB-lite"/>
    </source>
</evidence>
<evidence type="ECO:0000269" key="6">
    <source>
    </source>
</evidence>
<evidence type="ECO:0000269" key="7">
    <source>
    </source>
</evidence>
<evidence type="ECO:0000269" key="8">
    <source>
    </source>
</evidence>
<evidence type="ECO:0000269" key="9">
    <source>
    </source>
</evidence>
<evidence type="ECO:0000269" key="10">
    <source>
    </source>
</evidence>
<evidence type="ECO:0000269" key="11">
    <source>
    </source>
</evidence>
<evidence type="ECO:0000269" key="12">
    <source>
    </source>
</evidence>
<evidence type="ECO:0000269" key="13">
    <source>
    </source>
</evidence>
<evidence type="ECO:0000269" key="14">
    <source>
    </source>
</evidence>
<evidence type="ECO:0000269" key="15">
    <source>
    </source>
</evidence>
<evidence type="ECO:0000269" key="16">
    <source>
    </source>
</evidence>
<evidence type="ECO:0000269" key="17">
    <source>
    </source>
</evidence>
<evidence type="ECO:0000269" key="18">
    <source>
    </source>
</evidence>
<evidence type="ECO:0000269" key="19">
    <source>
    </source>
</evidence>
<evidence type="ECO:0000269" key="20">
    <source>
    </source>
</evidence>
<evidence type="ECO:0000269" key="21">
    <source>
    </source>
</evidence>
<evidence type="ECO:0000269" key="22">
    <source>
    </source>
</evidence>
<evidence type="ECO:0000269" key="23">
    <source>
    </source>
</evidence>
<evidence type="ECO:0000269" key="24">
    <source>
    </source>
</evidence>
<evidence type="ECO:0000269" key="25">
    <source>
    </source>
</evidence>
<evidence type="ECO:0000269" key="26">
    <source>
    </source>
</evidence>
<evidence type="ECO:0000269" key="27">
    <source>
    </source>
</evidence>
<evidence type="ECO:0000269" key="28">
    <source>
    </source>
</evidence>
<evidence type="ECO:0000269" key="29">
    <source>
    </source>
</evidence>
<evidence type="ECO:0000269" key="30">
    <source>
    </source>
</evidence>
<evidence type="ECO:0000269" key="31">
    <source>
    </source>
</evidence>
<evidence type="ECO:0000269" key="32">
    <source>
    </source>
</evidence>
<evidence type="ECO:0000269" key="33">
    <source>
    </source>
</evidence>
<evidence type="ECO:0000269" key="34">
    <source>
    </source>
</evidence>
<evidence type="ECO:0000269" key="35">
    <source>
    </source>
</evidence>
<evidence type="ECO:0000269" key="36">
    <source>
    </source>
</evidence>
<evidence type="ECO:0000269" key="37">
    <source>
    </source>
</evidence>
<evidence type="ECO:0000269" key="38">
    <source>
    </source>
</evidence>
<evidence type="ECO:0000269" key="39">
    <source>
    </source>
</evidence>
<evidence type="ECO:0000269" key="40">
    <source>
    </source>
</evidence>
<evidence type="ECO:0000269" key="41">
    <source>
    </source>
</evidence>
<evidence type="ECO:0000269" key="42">
    <source>
    </source>
</evidence>
<evidence type="ECO:0000269" key="43">
    <source>
    </source>
</evidence>
<evidence type="ECO:0000269" key="44">
    <source>
    </source>
</evidence>
<evidence type="ECO:0000269" key="45">
    <source>
    </source>
</evidence>
<evidence type="ECO:0000269" key="46">
    <source>
    </source>
</evidence>
<evidence type="ECO:0000269" key="47">
    <source>
    </source>
</evidence>
<evidence type="ECO:0000269" key="48">
    <source>
    </source>
</evidence>
<evidence type="ECO:0000269" key="49">
    <source>
    </source>
</evidence>
<evidence type="ECO:0000269" key="50">
    <source>
    </source>
</evidence>
<evidence type="ECO:0000269" key="51">
    <source>
    </source>
</evidence>
<evidence type="ECO:0000269" key="52">
    <source>
    </source>
</evidence>
<evidence type="ECO:0000269" key="53">
    <source>
    </source>
</evidence>
<evidence type="ECO:0000269" key="54">
    <source>
    </source>
</evidence>
<evidence type="ECO:0000269" key="55">
    <source>
    </source>
</evidence>
<evidence type="ECO:0000269" key="56">
    <source>
    </source>
</evidence>
<evidence type="ECO:0000269" key="57">
    <source>
    </source>
</evidence>
<evidence type="ECO:0000269" key="58">
    <source>
    </source>
</evidence>
<evidence type="ECO:0000269" key="59">
    <source ref="19"/>
</evidence>
<evidence type="ECO:0000269" key="60">
    <source ref="5"/>
</evidence>
<evidence type="ECO:0000305" key="61"/>
<evidence type="ECO:0000305" key="62">
    <source>
    </source>
</evidence>
<evidence type="ECO:0007744" key="63">
    <source>
        <dbReference type="PDB" id="5KZW"/>
    </source>
</evidence>
<evidence type="ECO:0007744" key="64">
    <source>
        <dbReference type="PDB" id="5KZX"/>
    </source>
</evidence>
<evidence type="ECO:0007744" key="65">
    <source>
        <dbReference type="PDB" id="5NN3"/>
    </source>
</evidence>
<evidence type="ECO:0007744" key="66">
    <source>
        <dbReference type="PDB" id="5NN4"/>
    </source>
</evidence>
<evidence type="ECO:0007744" key="67">
    <source>
        <dbReference type="PDB" id="5NN5"/>
    </source>
</evidence>
<evidence type="ECO:0007744" key="68">
    <source>
        <dbReference type="PDB" id="5NN6"/>
    </source>
</evidence>
<evidence type="ECO:0007744" key="69">
    <source>
        <dbReference type="PDB" id="5NN8"/>
    </source>
</evidence>
<evidence type="ECO:0007829" key="70">
    <source>
        <dbReference type="PDB" id="5KZW"/>
    </source>
</evidence>
<evidence type="ECO:0007829" key="71">
    <source>
        <dbReference type="PDB" id="5NN3"/>
    </source>
</evidence>
<evidence type="ECO:0007829" key="72">
    <source>
        <dbReference type="PDB" id="5NN4"/>
    </source>
</evidence>
<evidence type="ECO:0007829" key="73">
    <source>
        <dbReference type="PDB" id="5NN8"/>
    </source>
</evidence>
<proteinExistence type="evidence at protein level"/>
<name>LYAG_HUMAN</name>
<sequence length="952" mass="105324">MGVRHPPCSHRLLAVCALVSLATAALLGHILLHDFLLVPRELSGSSPVLEETHPAHQQGASRPGPRDAQAHPGRPRAVPTQCDVPPNSRFDCAPDKAITQEQCEARGCCYIPAKQGLQGAQMGQPWCFFPPSYPSYKLENLSSSEMGYTATLTRTTPTFFPKDILTLRLDVMMETENRLHFTIKDPANRRYEVPLETPHVHSRAPSPLYSVEFSEEPFGVIVRRQLDGRVLLNTTVAPLFFADQFLQLSTSLPSQYITGLAEHLSPLMLSTSWTRITLWNRDLAPTPGANLYGSHPFYLALEDGGSAHGVFLLNSNAMDVVLQPSPALSWRSTGGILDVYIFLGPEPKSVVQQYLDVVGYPFMPPYWGLGFHLCRWGYSSTAITRQVVENMTRAHFPLDVQWNDLDYMDSRRDFTFNKDGFRDFPAMVQELHQGGRRYMMIVDPAISSSGPAGSYRPYDEGLRRGVFITNETGQPLIGKVWPGSTAFPDFTNPTALAWWEDMVAEFHDQVPFDGMWIDMNEPSNFIRGSEDGCPNNELENPPYVPGVVGGTLQAATICASSHQFLSTHYNLHNLYGLTEAIASHRALVKARGTRPFVISRSTFAGHGRYAGHWTGDVWSSWEQLASSVPEILQFNLLGVPLVGADVCGFLGNTSEELCVRWTQLGAFYPFMRNHNSLLSLPQEPYSFSEPAQQAMRKALTLRYALLPHLYTLFHQAHVAGETVARPLFLEFPKDSSTWTVDHQLLWGEALLITPVLQAGKAEVTGYFPLGTWYDLQTVPVEALGSLPPPPAAPREPAIHSEGQWVTLPAPLDTINVHLRAGYIIPLQGPGLTTTESRQQPMALAVALTKGGEARGELFWDDGESLEVLERGAYTQVIFLARNNTIVNELVRVTSEGAGLQLQKVTVLGVATAPQQVLSNGVPVSNFTYSPDTKVLDICVSLLMGEQFLVSWC</sequence>
<accession>P10253</accession>
<accession>Q09GN4</accession>
<accession>Q14351</accession>
<accession>Q16302</accession>
<accession>Q8IWE7</accession>
<reference key="1">
    <citation type="journal article" date="1988" name="EMBO J.">
        <title>Primary structure and processing of lysosomal alpha-glucosidase; homology with the intestinal sucrase-isomaltase complex.</title>
        <authorList>
            <person name="Hoefsloot L.H."/>
            <person name="Hoogeveen-Westerveld M."/>
            <person name="Kroos M.A."/>
            <person name="van Beeumen J."/>
            <person name="Reuser A.J.J."/>
            <person name="Oostra B.A."/>
        </authorList>
    </citation>
    <scope>NUCLEOTIDE SEQUENCE [MRNA]</scope>
    <scope>PROTEIN SEQUENCE OF 70-89; 123-145; 204-215; 230-249; 332-345; 349-370; 394-409; 480-513; 520-545; 703-719; 726-731 AND 795-803</scope>
    <scope>VARIANTS ARG-199; HIS-223 AND ILE-780</scope>
    <source>
        <tissue>Placenta</tissue>
        <tissue>Testis</tissue>
        <tissue>Urine</tissue>
    </source>
</reference>
<reference key="2">
    <citation type="submission" date="1990-06" db="EMBL/GenBank/DDBJ databases">
        <authorList>
            <person name="Reuser A.J.J."/>
        </authorList>
    </citation>
    <scope>SEQUENCE REVISION</scope>
</reference>
<reference key="3">
    <citation type="journal article" date="1990" name="Biochem. J.">
        <title>Characterization of the human lysosomal alpha-glucosidase gene.</title>
        <authorList>
            <person name="Hoefsloot L.H."/>
            <person name="Hoogeveen-Westerveld M."/>
            <person name="Reuser A.J.J."/>
            <person name="Oostra B.A."/>
        </authorList>
    </citation>
    <scope>NUCLEOTIDE SEQUENCE [GENOMIC DNA]</scope>
    <scope>VARIANT ILE-780</scope>
</reference>
<reference key="4">
    <citation type="journal article" date="1990" name="DNA Cell Biol.">
        <title>Sequence of the cDNA and 5'-flanking region for human acid alpha-glucosidase, detection of an intron in the 5' untranslated leader sequence, definition of 18-bp polymorphisms, and differences with previous cDNA and amino acid sequences.</title>
        <authorList>
            <person name="Martiniuk F."/>
            <person name="Mehler M."/>
            <person name="Tzall S."/>
            <person name="Meredith G."/>
            <person name="Hirschhorn R."/>
        </authorList>
    </citation>
    <scope>NUCLEOTIDE SEQUENCE [MRNA]</scope>
    <scope>VARIANT ILE-780</scope>
</reference>
<reference key="5">
    <citation type="submission" date="2006-08" db="EMBL/GenBank/DDBJ databases">
        <title>Identification of a novel mutation in the acid alpha glucosidase gene causing juvenile form of Pompe disease in Iranian population.</title>
        <authorList>
            <person name="Ghaffari S.R."/>
            <person name="Sabokbar T."/>
            <person name="Tahmasebi S."/>
            <person name="Dastan J."/>
        </authorList>
    </citation>
    <scope>NUCLEOTIDE SEQUENCE [MRNA]</scope>
    <scope>VARIANT POMPE LEU-457</scope>
    <scope>VARIANTS ARG-199; HIS-223 AND ILE-780</scope>
</reference>
<reference key="6">
    <citation type="journal article" date="2006" name="Nature">
        <title>DNA sequence of human chromosome 17 and analysis of rearrangement in the human lineage.</title>
        <authorList>
            <person name="Zody M.C."/>
            <person name="Garber M."/>
            <person name="Adams D.J."/>
            <person name="Sharpe T."/>
            <person name="Harrow J."/>
            <person name="Lupski J.R."/>
            <person name="Nicholson C."/>
            <person name="Searle S.M."/>
            <person name="Wilming L."/>
            <person name="Young S.K."/>
            <person name="Abouelleil A."/>
            <person name="Allen N.R."/>
            <person name="Bi W."/>
            <person name="Bloom T."/>
            <person name="Borowsky M.L."/>
            <person name="Bugalter B.E."/>
            <person name="Butler J."/>
            <person name="Chang J.L."/>
            <person name="Chen C.-K."/>
            <person name="Cook A."/>
            <person name="Corum B."/>
            <person name="Cuomo C.A."/>
            <person name="de Jong P.J."/>
            <person name="DeCaprio D."/>
            <person name="Dewar K."/>
            <person name="FitzGerald M."/>
            <person name="Gilbert J."/>
            <person name="Gibson R."/>
            <person name="Gnerre S."/>
            <person name="Goldstein S."/>
            <person name="Grafham D.V."/>
            <person name="Grocock R."/>
            <person name="Hafez N."/>
            <person name="Hagopian D.S."/>
            <person name="Hart E."/>
            <person name="Norman C.H."/>
            <person name="Humphray S."/>
            <person name="Jaffe D.B."/>
            <person name="Jones M."/>
            <person name="Kamal M."/>
            <person name="Khodiyar V.K."/>
            <person name="LaButti K."/>
            <person name="Laird G."/>
            <person name="Lehoczky J."/>
            <person name="Liu X."/>
            <person name="Lokyitsang T."/>
            <person name="Loveland J."/>
            <person name="Lui A."/>
            <person name="Macdonald P."/>
            <person name="Major J.E."/>
            <person name="Matthews L."/>
            <person name="Mauceli E."/>
            <person name="McCarroll S.A."/>
            <person name="Mihalev A.H."/>
            <person name="Mudge J."/>
            <person name="Nguyen C."/>
            <person name="Nicol R."/>
            <person name="O'Leary S.B."/>
            <person name="Osoegawa K."/>
            <person name="Schwartz D.C."/>
            <person name="Shaw-Smith C."/>
            <person name="Stankiewicz P."/>
            <person name="Steward C."/>
            <person name="Swarbreck D."/>
            <person name="Venkataraman V."/>
            <person name="Whittaker C.A."/>
            <person name="Yang X."/>
            <person name="Zimmer A.R."/>
            <person name="Bradley A."/>
            <person name="Hubbard T."/>
            <person name="Birren B.W."/>
            <person name="Rogers J."/>
            <person name="Lander E.S."/>
            <person name="Nusbaum C."/>
        </authorList>
    </citation>
    <scope>NUCLEOTIDE SEQUENCE [LARGE SCALE GENOMIC DNA]</scope>
</reference>
<reference key="7">
    <citation type="journal article" date="2004" name="Genome Res.">
        <title>The status, quality, and expansion of the NIH full-length cDNA project: the Mammalian Gene Collection (MGC).</title>
        <authorList>
            <consortium name="The MGC Project Team"/>
        </authorList>
    </citation>
    <scope>NUCLEOTIDE SEQUENCE [LARGE SCALE MRNA]</scope>
    <source>
        <tissue>Duodenum</tissue>
    </source>
</reference>
<reference key="8">
    <citation type="journal article" date="1995" name="Biochem. Biophys. Res. Commun.">
        <title>Identification of a de novo point mutation resulting in infantile form of Pompe's disease.</title>
        <authorList>
            <person name="Lin C.-Y."/>
            <person name="Shieh J.-J."/>
        </authorList>
    </citation>
    <scope>NUCLEOTIDE SEQUENCE [MRNA] OF 631-680</scope>
    <scope>VARIANT POMPE HIS-645</scope>
</reference>
<reference key="9">
    <citation type="journal article" date="1991" name="J. Biol. Chem.">
        <title>Human lysosomal alpha-glucosidase. Characterization of the catalytic site.</title>
        <authorList>
            <person name="Hermans M.M.P."/>
            <person name="Kroos M.A."/>
            <person name="van Beeumen J."/>
            <person name="Oostra B.A."/>
            <person name="Reuser A.J.J."/>
        </authorList>
    </citation>
    <scope>FUNCTION</scope>
    <scope>CATALYTIC ACTIVITY</scope>
    <scope>MUTAGENESIS OF TRP-516 AND ASP-518</scope>
    <scope>ACTIVE SITE</scope>
</reference>
<reference key="10">
    <citation type="journal article" date="1993" name="Biochem. J.">
        <title>Human lysosomal alpha-glucosidase: functional characterization of the glycosylation sites.</title>
        <authorList>
            <person name="Hermans M.M.P."/>
            <person name="Wisselaar H.A."/>
            <person name="Kroos M.A."/>
            <person name="Oostra B.A."/>
            <person name="Reuser A.J.J."/>
        </authorList>
    </citation>
    <scope>GLYCOSYLATION AT ASN-140; ASN-233; ASN-390; ASN-470; ASN-652; ASN-882 AND ASN-925</scope>
</reference>
<reference key="11">
    <citation type="journal article" date="2003" name="Nat. Biotechnol.">
        <title>Identification and quantification of N-linked glycoproteins using hydrazide chemistry, stable isotope labeling and mass spectrometry.</title>
        <authorList>
            <person name="Zhang H."/>
            <person name="Li X.-J."/>
            <person name="Martin D.B."/>
            <person name="Aebersold R."/>
        </authorList>
    </citation>
    <scope>GLYCOSYLATION AT ASN-470</scope>
</reference>
<reference key="12">
    <citation type="journal article" date="1995" name="Muscle Nerve">
        <title>Glycogenosis type II (acid maltase deficiency).</title>
        <authorList>
            <person name="Reuser A.J.J."/>
            <person name="Kroos M.A."/>
            <person name="Hermans M.M.P."/>
            <person name="Bijvoet A.G.A."/>
            <person name="Verbeet M.P."/>
            <person name="van Diggelen O.P."/>
            <person name="Kleijer W.J."/>
            <person name="van der Ploeg A.T."/>
        </authorList>
    </citation>
    <scope>REVIEW ON VARIANTS</scope>
</reference>
<reference key="13">
    <citation type="journal article" date="2005" name="J. Proteome Res.">
        <title>Human plasma N-glycoproteome analysis by immunoaffinity subtraction, hydrazide chemistry, and mass spectrometry.</title>
        <authorList>
            <person name="Liu T."/>
            <person name="Qian W.-J."/>
            <person name="Gritsenko M.A."/>
            <person name="Camp D.G. II"/>
            <person name="Monroe M.E."/>
            <person name="Moore R.J."/>
            <person name="Smith R.D."/>
        </authorList>
    </citation>
    <scope>GLYCOSYLATION [LARGE SCALE ANALYSIS] AT ASN-390</scope>
    <source>
        <tissue>Plasma</tissue>
    </source>
</reference>
<reference key="14">
    <citation type="journal article" date="2007" name="Traffic">
        <title>Integral and associated lysosomal membrane proteins.</title>
        <authorList>
            <person name="Schroeder B."/>
            <person name="Wrocklage C."/>
            <person name="Pan C."/>
            <person name="Jaeger R."/>
            <person name="Koesters B."/>
            <person name="Schaefer H."/>
            <person name="Elsaesser H.-P."/>
            <person name="Mann M."/>
            <person name="Hasilik A."/>
        </authorList>
    </citation>
    <scope>SUBCELLULAR LOCATION [LARGE SCALE ANALYSIS]</scope>
    <source>
        <tissue>Placenta</tissue>
    </source>
</reference>
<reference key="15">
    <citation type="journal article" date="2009" name="J. Proteome Res.">
        <title>Glycoproteomics analysis of human liver tissue by combination of multiple enzyme digestion and hydrazide chemistry.</title>
        <authorList>
            <person name="Chen R."/>
            <person name="Jiang X."/>
            <person name="Sun D."/>
            <person name="Han G."/>
            <person name="Wang F."/>
            <person name="Ye M."/>
            <person name="Wang L."/>
            <person name="Zou H."/>
        </authorList>
    </citation>
    <scope>GLYCOSYLATION [LARGE SCALE ANALYSIS] AT ASN-140; ASN-470; ASN-882 AND ASN-925</scope>
    <source>
        <tissue>Liver</tissue>
    </source>
</reference>
<reference key="16">
    <citation type="journal article" date="2011" name="BMC Syst. Biol.">
        <title>Initial characterization of the human central proteome.</title>
        <authorList>
            <person name="Burkard T.R."/>
            <person name="Planyavsky M."/>
            <person name="Kaupe I."/>
            <person name="Breitwieser F.P."/>
            <person name="Buerckstuemmer T."/>
            <person name="Bennett K.L."/>
            <person name="Superti-Furga G."/>
            <person name="Colinge J."/>
        </authorList>
    </citation>
    <scope>IDENTIFICATION BY MASS SPECTROMETRY [LARGE SCALE ANALYSIS]</scope>
</reference>
<reference key="17">
    <citation type="journal article" date="2014" name="J. Proteomics">
        <title>An enzyme assisted RP-RPLC approach for in-depth analysis of human liver phosphoproteome.</title>
        <authorList>
            <person name="Bian Y."/>
            <person name="Song C."/>
            <person name="Cheng K."/>
            <person name="Dong M."/>
            <person name="Wang F."/>
            <person name="Huang J."/>
            <person name="Sun D."/>
            <person name="Wang L."/>
            <person name="Ye M."/>
            <person name="Zou H."/>
        </authorList>
    </citation>
    <scope>IDENTIFICATION BY MASS SPECTROMETRY [LARGE SCALE ANALYSIS]</scope>
    <source>
        <tissue>Liver</tissue>
    </source>
</reference>
<reference key="18">
    <citation type="journal article" date="2015" name="Proteomics">
        <title>N-terminome analysis of the human mitochondrial proteome.</title>
        <authorList>
            <person name="Vaca Jacome A.S."/>
            <person name="Rabilloud T."/>
            <person name="Schaeffer-Reiss C."/>
            <person name="Rompais M."/>
            <person name="Ayoub D."/>
            <person name="Lane L."/>
            <person name="Bairoch A."/>
            <person name="Van Dorsselaer A."/>
            <person name="Carapito C."/>
        </authorList>
    </citation>
    <scope>IDENTIFICATION BY MASS SPECTROMETRY [LARGE SCALE ANALYSIS]</scope>
</reference>
<reference evidence="63 64" key="19">
    <citation type="submission" date="2016-07" db="PDB data bank">
        <title>The structure of human GAA: structural basis of Pompe disease.</title>
        <authorList>
            <person name="Deming D.T."/>
            <person name="Garman S.C."/>
        </authorList>
    </citation>
    <scope>X-RAY CRYSTALLOGRAPHY (2.00 ANGSTROMS) OF 79-952</scope>
    <scope>GLYCOSYLATION AT ASN-140; ASN-233; ASN-390; ASN-470; ASN-652 AND ASN-882</scope>
    <scope>DISULFIDE BONDS</scope>
</reference>
<reference evidence="65 66 67 68 69" key="20">
    <citation type="journal article" date="2017" name="Nat. Commun.">
        <title>Structure of human lysosomal acid alpha-glucosidase-a guide for the treatment of Pompe disease.</title>
        <authorList>
            <person name="Roig-Zamboni V."/>
            <person name="Cobucci-Ponzano B."/>
            <person name="Iacono R."/>
            <person name="Ferrara M.C."/>
            <person name="Germany S."/>
            <person name="Bourne Y."/>
            <person name="Parenti G."/>
            <person name="Moracci M."/>
            <person name="Sulzenbacher G."/>
        </authorList>
    </citation>
    <scope>X-RAY CRYSTALLOGRAPHY (1.83 ANGSTROMS) OF 81-952 IN COMPLEXES WITH SUBSTRATE ANALOGS</scope>
    <scope>FUNCTION</scope>
    <scope>CATALYTIC ACTIVITY</scope>
    <scope>GLYCOSYLATION AT ASN-140; ASN-233; ASN-390; ASN-470; ASN-652 AND ASN-882</scope>
    <scope>DISULFIDE BONDS</scope>
</reference>
<reference key="21">
    <citation type="journal article" date="1990" name="Am. J. Hum. Genet.">
        <title>Identification of the base-pair substitution responsible for a human acid alpha glucosidase allele with lower 'affinity' for glycogen (GAA 2) and transient gene expression in deficient cells.</title>
        <authorList>
            <person name="Martiniuk F."/>
            <person name="Bodkin M."/>
            <person name="Tzall S."/>
            <person name="Hirschhorn R."/>
        </authorList>
    </citation>
    <scope>VARIANT ASN-91</scope>
</reference>
<reference key="22">
    <citation type="journal article" date="1991" name="Am. J. Hum. Genet.">
        <title>Identification of a missense mutation in one allele of a patient with Pompe disease, and use of endonuclease digestion of PCR-amplified RNA to demonstrate lack of mRNA expression from the second allele.</title>
        <authorList>
            <person name="Zhong N."/>
            <person name="Martiniuk F."/>
            <person name="Tzall S."/>
            <person name="Hirschhorn R."/>
        </authorList>
    </citation>
    <scope>VARIANT POMPE THR-318</scope>
</reference>
<reference key="23">
    <citation type="journal article" date="1991" name="Biochem. Biophys. Res. Commun.">
        <title>Identification of a point mutation in the human lysosomal alpha-glucosidase gene causing infantile glycogenosis type II.</title>
        <authorList>
            <person name="Hermans M.M.P."/>
            <person name="de Graaff E."/>
            <person name="Kroos M.A."/>
            <person name="Wisselaar H.A."/>
            <person name="Oostra B.A."/>
            <person name="Reuser A.J.J."/>
        </authorList>
    </citation>
    <scope>VARIANT POMPE LYS-521</scope>
</reference>
<reference key="24">
    <citation type="journal article" date="1993" name="Hum. Mutat.">
        <title>Two mutations affecting the transport and maturation of lysosomal alpha-glucosidase in an adult case of glycogen storage disease type II.</title>
        <authorList>
            <person name="Hermans M.M.P."/>
            <person name="Kroos M.A."/>
            <person name="de Graaff E."/>
            <person name="Oostra B.A."/>
            <person name="Reuser A.J.J."/>
        </authorList>
    </citation>
    <scope>VARIANTS POMPE ARG-643 AND TRP-725</scope>
</reference>
<reference key="25">
    <citation type="journal article" date="1993" name="Biochem. J.">
        <title>The conservative substitution Asp-645--&gt;Glu in lysosomal alpha-glucosidase affects transport and phosphorylation of the enzyme in an adult patient with glycogen-storage disease type II.</title>
        <authorList>
            <person name="Hermans M.M.P."/>
            <person name="de Graaff E."/>
            <person name="Kroos M.A."/>
            <person name="Wisselaar H.A."/>
            <person name="Willemsen R."/>
            <person name="Oostra B.A."/>
            <person name="Reuser A.J.J."/>
        </authorList>
    </citation>
    <scope>VARIANT POMPE GLU-645</scope>
    <scope>VARIANTS ILE-816 AND ILE-927</scope>
</reference>
<reference key="26">
    <citation type="journal article" date="1991" name="DNA Cell Biol.">
        <title>Identification of a missense mutation in an adult-onset patient with glycogenosis type II expressing only one allele.</title>
        <authorList>
            <person name="Martiniuk F."/>
            <person name="Mehler M."/>
            <person name="Bodkin M."/>
            <person name="Tzall S."/>
            <person name="Hirschhorn K."/>
            <person name="Zhong N."/>
            <person name="Hirschhorn R."/>
        </authorList>
    </citation>
    <scope>VARIANT POMPE GLU-645</scope>
    <scope>VARIANTS ILE-816 AND ILE-927</scope>
</reference>
<reference key="27">
    <citation type="journal article" date="1993" name="Genomics">
        <title>The loss of a polymorphic glycosylation site caused by Thr-927--&gt;Ile is linked to a second polymorphic Val-816--&gt;Ile substitution in lysosomal alpha-glucosidase of American blacks.</title>
        <authorList>
            <person name="Hermans M.M.P."/>
            <person name="Svetkey L.P."/>
            <person name="Oostra B.A."/>
            <person name="Chen Y.T."/>
            <person name="Reuser A.J.J."/>
        </authorList>
    </citation>
    <scope>VARIANTS ILE-816 AND ILE-927</scope>
</reference>
<reference key="28">
    <citation type="journal article" date="1994" name="Hum. Mutat.">
        <title>Mutation at the catalytic site (M519V) in glycogen storage disease type II (Pompe disease).</title>
        <authorList>
            <person name="Huie M.L."/>
            <person name="Hirschhorn R."/>
            <person name="Chen A.S."/>
            <person name="Martiniuk F."/>
            <person name="Zhong N."/>
        </authorList>
    </citation>
    <scope>VARIANT POMPE VAL-519</scope>
</reference>
<reference key="29">
    <citation type="journal article" date="1994" name="Hum. Mol. Genet.">
        <title>A de novo 13 nt deletion, a newly identified C647W missense mutation and a deletion of exon 18 in infantile onset glycogen storage disease type II (GSDII).</title>
        <authorList>
            <person name="Huie M.L."/>
            <person name="Chen A.S."/>
            <person name="Brooks S.S."/>
            <person name="Grix A."/>
            <person name="Hirschhorn R."/>
        </authorList>
    </citation>
    <scope>VARIANT POMPE TRP-647</scope>
</reference>
<reference key="30">
    <citation type="journal article" date="1994" name="Hum. Mol. Genet.">
        <title>The effect of a single base pair deletion (delta T525) and a C1634T missense mutation (Pro545Leu) on the expression of lysosomal alpha-glucosidase in patients with glycogen storage disease type II.</title>
        <authorList>
            <person name="Hermans M.M.P."/>
            <person name="de Graaff E."/>
            <person name="Kroos M.A."/>
            <person name="Mohkamsing S."/>
            <person name="Eussen B.J."/>
            <person name="Joosse M."/>
            <person name="Willemsen R."/>
            <person name="Kleijer W.J."/>
            <person name="Oostra B.A."/>
            <person name="Reuser A.J.J."/>
        </authorList>
    </citation>
    <scope>VARIANT POMPE LEU-545</scope>
</reference>
<reference key="31">
    <citation type="journal article" date="1995" name="Am. J. Hum. Genet.">
        <title>Leaky splicing mutation in the acid maltase gene is associated with delayed onset of glycogenosis type II.</title>
        <authorList>
            <person name="Boerkoel C.F."/>
            <person name="Exelbert R."/>
            <person name="Nicastri C."/>
            <person name="Nichols R.C."/>
            <person name="Miller F.W."/>
            <person name="Plotz P.H."/>
            <person name="Raben N."/>
        </authorList>
    </citation>
    <scope>VARIANTS POMPE ARG-299 AND LYS-903 DEL</scope>
    <scope>VARIANTS ARG-199; HIS-223 AND ILE-780</scope>
    <scope>FUNCTION</scope>
    <scope>CATALYTIC ACTIVITY</scope>
</reference>
<reference key="32">
    <citation type="journal article" date="1996" name="Ann. Hum. Genet.">
        <title>Identification of an E689K substitution as the molecular basis of the human acid alpha-glucosidase type 4 allozyme (GAA*4).</title>
        <authorList>
            <person name="Huie M.L."/>
            <person name="Menaker M."/>
            <person name="McAlpine P.J."/>
            <person name="Hirschhorn R."/>
        </authorList>
    </citation>
    <scope>VARIANT LYS-689</scope>
</reference>
<reference key="33">
    <citation type="journal article" date="1996" name="Hum. Genet.">
        <title>Acid alpha-glucosidase deficiency: identification and expression of a missense mutation (S529V) in a Japanese adult phenotype.</title>
        <authorList>
            <person name="Tsunoda H."/>
            <person name="Ohshima T."/>
            <person name="Tohyama J."/>
            <person name="Sasaki M."/>
            <person name="Sakuragawa N."/>
            <person name="Martiniuk F."/>
        </authorList>
    </citation>
    <scope>VARIANT POMPE VAL-529</scope>
</reference>
<reference key="34">
    <citation type="journal article" date="1998" name="Biochem. Biophys. Res. Commun.">
        <title>Glycogen storage disease type II: identification of four novel missense mutations (D645N, G648S, R672W, R672Q) and two insertions/deletions in the acid alpha-glucosidase locus of patients of differing phenotype.</title>
        <authorList>
            <person name="Huie M.L."/>
            <person name="Tsujino S."/>
            <person name="Brooks S.S."/>
            <person name="Engel A."/>
            <person name="Elias E."/>
            <person name="Bonthron D.T."/>
            <person name="Bessley C."/>
            <person name="Shanske S."/>
            <person name="Dimauro S."/>
            <person name="Goto Y."/>
            <person name="Hirschhorn R."/>
        </authorList>
    </citation>
    <scope>VARIANTS POMPE ASN-645; TRP-647; SER-648; GLN-672 AND TRP-672</scope>
</reference>
<reference key="35">
    <citation type="journal article" date="1998" name="Clin. Genet.">
        <title>Glycogen storage disease type II: identification of a dinucleotide deletion and a common missense mutation in the lysosomal alpha-glucosidase gene.</title>
        <authorList>
            <person name="Kroos M.A."/>
            <person name="van Leenen D."/>
            <person name="Verbiest J."/>
            <person name="Reuser A.J.J."/>
            <person name="Hermans M.M.P."/>
        </authorList>
    </citation>
    <scope>VARIANT POMPE ARG-309</scope>
</reference>
<reference key="36">
    <citation type="journal article" date="1998" name="Hum. Mutat.">
        <title>Glycogen storage disease type II: genetic and biochemical analysis of novel mutations in infantile patients from Turkish ancestry.</title>
        <authorList>
            <person name="Hermans M.M.P."/>
            <person name="Kroos M.A."/>
            <person name="Smeitink J.A.M."/>
            <person name="van der Ploeg A.T."/>
            <person name="Kleijer W.J."/>
            <person name="Reuser A.J.J."/>
        </authorList>
    </citation>
    <scope>VARIANTS POMPE PRO-566; ARG-643 AND ARG-768</scope>
    <scope>VARIANTS ASN-91; ARG-199 AND HIS-223</scope>
</reference>
<reference key="37">
    <citation type="journal article" date="1998" name="Hum. Mutat.">
        <title>The identification of five novel mutations in the lysosomal acid alpha-(1,4) glucosidase gene from patients with glycogen storage disease type II.</title>
        <authorList>
            <person name="Beesley C.E."/>
            <person name="Child A.H."/>
            <person name="Yacoub M.Y."/>
        </authorList>
    </citation>
    <scope>VARIANT POMPE GLY-VAL-PRO-VAL-SER-ASN-925 INS</scope>
</reference>
<reference key="38">
    <citation type="journal article" date="1998" name="Neurogenetics">
        <title>Adult-onset glycogen storage disease type II: phenotypic and allelic heterogeneity in German patients.</title>
        <authorList>
            <person name="Vorgerd M."/>
            <person name="Burwinkel B."/>
            <person name="Reichmann H."/>
            <person name="Malin J.-P."/>
            <person name="Kilimann M.W."/>
        </authorList>
    </citation>
    <scope>VARIANTS POMPE LEU-545 AND TRP-638</scope>
</reference>
<reference key="39">
    <citation type="journal article" date="1999" name="Hum. Mutat.">
        <title>Novel mutations in African American patients with glycogen storage disease Type II.</title>
        <authorList>
            <person name="Raben N."/>
            <person name="Lee E."/>
            <person name="Lee L."/>
            <person name="Hirschhorn R."/>
            <person name="Plotz P.H."/>
        </authorList>
    </citation>
    <scope>VARIANT POMPE ARG-481</scope>
</reference>
<reference key="40">
    <citation type="journal article" date="1999" name="Hum. Mutat.">
        <title>Molecular genetic study of Pompe disease in Chinese patients in Taiwan.</title>
        <authorList>
            <person name="Ko T.-M."/>
            <person name="Hwu W.-L."/>
            <person name="Lin Y.-W."/>
            <person name="Tseng L.-H."/>
            <person name="Hwa H.-L."/>
            <person name="Wang T.-R."/>
            <person name="Chuang S.-M."/>
        </authorList>
    </citation>
    <scope>VARIANTS POMPE HIS-600 AND ASN-675 DEL</scope>
</reference>
<reference key="41">
    <citation type="journal article" date="2000" name="Neurology">
        <title>Juvenile and adult-onset acid maltase deficiency in France: genotype-phenotype correlation.</title>
        <authorList>
            <person name="Laforet P."/>
            <person name="Nicolino M."/>
            <person name="Eymard P.B."/>
            <person name="Puech J.P."/>
            <person name="Caillaud C."/>
            <person name="Poenaru L."/>
            <person name="Fardeau M."/>
        </authorList>
    </citation>
    <scope>VARIANTS POMPE PRO-208; LEU-308; LEU-324; MET-585; 607-GLY--HIS-612 DEL; ARG-643 AND THR-672</scope>
</reference>
<reference key="42">
    <citation type="journal article" date="2002" name="Neuromuscul. Disord.">
        <title>Identification of six novel mutations in the acid alpha-glucosidase gene in three Spanish patients with infantile onset glycogen storage disease type II (Pompe disease).</title>
        <authorList>
            <person name="Fernandez-Hojas R."/>
            <person name="Huie M.L."/>
            <person name="Navarro C."/>
            <person name="Dominguez C."/>
            <person name="Roig M."/>
            <person name="Lopez-Coronas D."/>
            <person name="Teijeira S."/>
            <person name="Anyane-Yeboa K."/>
            <person name="Hirschhorn R."/>
        </authorList>
    </citation>
    <scope>VARIANTS POMPE ARG-219; LYS-262 AND VAL-408</scope>
</reference>
<reference key="43">
    <citation type="journal article" date="2003" name="Am. J. Med. Genet. A">
        <title>Identification of four novel mutations in the alpha glucosidase gene in five Italian patients with infantile onset glycogen storage disease type II.</title>
        <authorList>
            <person name="Pittis M.G."/>
            <person name="Montalvo A.L."/>
            <person name="Miocic S."/>
            <person name="Martini C."/>
            <person name="Deganuto M."/>
            <person name="Candusso M."/>
            <person name="Ciana G."/>
            <person name="Bembi B."/>
        </authorList>
    </citation>
    <scope>VARIANT POMPE TRP-224</scope>
    <scope>CHARACTERIZATION OF VARIANT POMPE TRP-224</scope>
</reference>
<reference key="44">
    <citation type="journal article" date="2003" name="Neurology">
        <title>Juvenile-onset glycogen storage disease type II with novel mutations in acid alpha-glucosidase gene.</title>
        <authorList>
            <person name="Lam C.W."/>
            <person name="Yuen Y.P."/>
            <person name="Chan K.Y."/>
            <person name="Tong S.F."/>
            <person name="Lai C.K."/>
            <person name="Chow T.C."/>
            <person name="Lee K.C."/>
            <person name="Chan Y.W."/>
            <person name="Martiniuk F."/>
        </authorList>
    </citation>
    <scope>VARIANTS POMPE LEU-361 AND CYS-437</scope>
</reference>
<reference key="45">
    <citation type="journal article" date="2003" name="Pediatr. Neurol.">
        <title>New GAA mutations in Japanese patients with GSDII (Pompe disease).</title>
        <authorList>
            <person name="Pipo J.R."/>
            <person name="Feng J.-H."/>
            <person name="Yamamoto T."/>
            <person name="Ohsaki Y."/>
            <person name="Nanba E."/>
            <person name="Tsujino S."/>
            <person name="Sakuragawa N."/>
            <person name="Martiniuk F."/>
            <person name="Ninomiya H."/>
            <person name="Oka A."/>
            <person name="Ohno K."/>
        </authorList>
    </citation>
    <scope>VARIANTS POMPE TRP-224; CYS-600; ARG-619 AND HIS-660</scope>
    <scope>CHARACTERIZATION OF VARIANTS POMPE TRP-224; ARG-619 AND HIS-660</scope>
    <scope>CHARACTERIZATION OF VARIANT SER-576</scope>
</reference>
<reference key="46">
    <citation type="journal article" date="2004" name="Hum. Mutat.">
        <title>Twenty-two novel mutations in the lysosomal alpha-glucosidase gene (GAA) underscore the genotype-phenotype correlation in glycogen storage disease type II.</title>
        <authorList>
            <person name="Hermans M.M.P."/>
            <person name="van Leenen D."/>
            <person name="Kroos M.A."/>
            <person name="Beesley C.E."/>
            <person name="Van der Ploeg A.T."/>
            <person name="Sakuraba H."/>
            <person name="Wevers R."/>
            <person name="Kleijer W.J."/>
            <person name="Michelakakis H."/>
            <person name="Kirk E.P."/>
            <person name="Fletcher J."/>
            <person name="Bosshard N."/>
            <person name="Basel-Vanagaite L."/>
            <person name="Besley G."/>
            <person name="Reuser A.J.J."/>
        </authorList>
    </citation>
    <scope>VARIANTS POMPE GLY-103; ARG-219; ARG-285; CYS-292; ARG-293; PRO-308; ARG-312; PRO-355; ARG-374; PRO-405; PHE-455; ASP-459 DEL; ARG-478; ARG-481; THR-519; LEU-545; ARG-549; PRO-552; SER-575; LYS-579; CYS-600; ASP-607 AND ASP-880</scope>
    <scope>CHARACTERIZATION OF VARIANTS</scope>
    <scope>FUNCTION</scope>
</reference>
<reference key="47">
    <citation type="journal article" date="2004" name="Mol. Genet. Metab.">
        <title>Glycogenosis type II: identification and expression of three novel mutations in the acid alpha-glucosidase gene causing the infantile form of the disease.</title>
        <authorList>
            <person name="Montalvo A.L.E."/>
            <person name="Cariati R."/>
            <person name="Deganuto M."/>
            <person name="Guerci V."/>
            <person name="Garcia R."/>
            <person name="Ciana G."/>
            <person name="Bembi B."/>
            <person name="Pittis M.G."/>
        </authorList>
    </citation>
    <scope>VARIANTS POMPE PRO-355 AND CYS-702</scope>
    <scope>CHARACTERIZATION OF VARIANTS POMPE PRO-355 AND CYS-702</scope>
</reference>
<reference key="48">
    <citation type="journal article" date="2004" name="Neuromuscul. Disord.">
        <title>A case of childhood Pompe disease demonstrating phenotypic variability of p.Asp645Asn.</title>
        <authorList>
            <person name="Kroos M.A."/>
            <person name="Kirschner J."/>
            <person name="Gellerich F.N."/>
            <person name="Hermans M.M."/>
            <person name="Van der Ploeg A.T."/>
            <person name="Reuser A.J."/>
            <person name="Korinthenberg R."/>
        </authorList>
    </citation>
    <scope>VARIANT POMPE GLN-901</scope>
    <scope>VARIANT ASN-645</scope>
</reference>
<reference key="49">
    <citation type="journal article" date="2005" name="Neurology">
        <title>Mutations in the acid alpha-glucosidase gene (M. Pompe) in a patient with an unusual phenotype.</title>
        <authorList>
            <person name="Anneser J.M."/>
            <person name="Pongratz D.E."/>
            <person name="Podskarbi T."/>
            <person name="Shin Y.S."/>
            <person name="Schoser B.G."/>
        </authorList>
    </citation>
    <scope>VARIANTS POMPE VAL-237 AND ARG-293</scope>
</reference>
<reference key="50">
    <citation type="journal article" date="2006" name="Clin. Chim. Acta">
        <title>A novel missense mutation in the acid alpha-glucosidase gene causing the classic infantile form of Pompe disease.</title>
        <authorList>
            <person name="Dou W."/>
            <person name="Gu X."/>
            <person name="Fu L."/>
            <person name="Peng C."/>
            <person name="Zheng J."/>
            <person name="Martiniuk F."/>
            <person name="Sheng H.Z."/>
        </authorList>
    </citation>
    <scope>VARIANT POMPE GLY-330</scope>
</reference>
<reference key="51">
    <citation type="journal article" date="2006" name="Clin. Genet.">
        <title>Two clinical forms of glycogen-storage disease type II in two generations of the same family.</title>
        <authorList>
            <person name="Amartino H."/>
            <person name="Painceira D."/>
            <person name="Pomponio R.J."/>
            <person name="Niizawa G."/>
            <person name="Sabio Paz V."/>
            <person name="Blanco M."/>
            <person name="Chamoles N."/>
        </authorList>
    </citation>
    <scope>VARIANT POMPE ASN-404</scope>
</reference>
<reference key="52">
    <citation type="journal article" date="2006" name="Hum. Mutat.">
        <title>Mutation profile of the GAA gene in 40 Italian patients with late onset glycogen storage disease type II.</title>
        <authorList>
            <person name="Montalvo A.L."/>
            <person name="Bembi B."/>
            <person name="Donnarumma M."/>
            <person name="Filocamo M."/>
            <person name="Parenti G."/>
            <person name="Rossi M."/>
            <person name="Merlini L."/>
            <person name="Buratti E."/>
            <person name="De Filippi P."/>
            <person name="Dardis A."/>
            <person name="Stroppiano M."/>
            <person name="Ciana G."/>
            <person name="Pittis M.G."/>
        </authorList>
    </citation>
    <scope>VARIANTS POMPE ARG-309; PRO-355; LEU-361; PRO-445; ASN-489; ARG-549; GLN-612; ARG-643; TRP-672 AND CYS-746</scope>
</reference>
<reference key="53">
    <citation type="journal article" date="2007" name="Neuromuscul. Disord.">
        <title>Late onset Pompe disease: clinical and neurophysiological spectrum of 38 patients including long-term follow-up in 18 patients.</title>
        <authorList>
            <person name="Muller-Felber W."/>
            <person name="Horvath R."/>
            <person name="Gempel K."/>
            <person name="Podskarbi T."/>
            <person name="Shin Y."/>
            <person name="Pongratz D."/>
            <person name="Walter M.C."/>
            <person name="Baethmann M."/>
            <person name="Schlotter-Weigel B."/>
            <person name="Lochmuller H."/>
            <person name="Schoser B."/>
        </authorList>
    </citation>
    <scope>VARIANTS POMPE PRO-355; ALA-522 AND VAL-610</scope>
    <scope>VARIANT ARG-359</scope>
</reference>
<reference key="54">
    <citation type="journal article" date="2008" name="Hum. Mutat.">
        <title>Update of the Pompe disease mutation database with 107 sequence variants and a format for severity rating.</title>
        <authorList>
            <person name="Kroos M."/>
            <person name="Pomponio R.J."/>
            <person name="van Vliet L."/>
            <person name="Palmer R.E."/>
            <person name="Phipps M."/>
            <person name="Van der Helm R."/>
            <person name="Halley D."/>
            <person name="Reuser A."/>
        </authorList>
    </citation>
    <scope>VARIANTS POMPE HIS-190; SER-285; PHE-291; PRO-291; LYS-318; ARG-335; ARG-347; ARG-482; VAL-483; GLN-521; SER-522; LYS-570; GLN-572; PRO-594; LYS-614; ASN-737; SER-746 AND PRO-935</scope>
    <scope>VARIANT LYS-585</scope>
</reference>
<reference key="55">
    <citation type="journal article" date="2008" name="Hum. Mutat.">
        <title>Molecular and functional characterization of eight novel GAA mutations in Italian infants with Pompe disease.</title>
        <authorList>
            <person name="Pittis M.G."/>
            <person name="Donnarumma M."/>
            <person name="Montalvo A.L.E."/>
            <person name="Dominissini S."/>
            <person name="Kroos M."/>
            <person name="Rosano C."/>
            <person name="Stroppiano M."/>
            <person name="Bianco M.G."/>
            <person name="Donati M.A."/>
            <person name="Parenti G."/>
            <person name="D'Amico A."/>
            <person name="Ciana G."/>
            <person name="Di Rocco M."/>
            <person name="Reuser A."/>
            <person name="Bembi B."/>
            <person name="Filocamo M."/>
        </authorList>
    </citation>
    <scope>VARIANTS POMPE GLY-103; CYS-191; ARG-219; TRP-224; LYS-262; ARG-293; PRO-355; LEU-375; ARG-401; ASN-489; ALA-522; PRO-552; TYR-599; TRP-638; ARG-643 AND ASN-645</scope>
    <scope>CHARACTERIZATION OF VARIANTS POMPE CYS-191; LEU-375; ARG-401; ALA-522 AND TYR-599</scope>
    <scope>FUNCTION</scope>
    <scope>CATALYTIC ACTIVITY</scope>
</reference>
<reference key="56">
    <citation type="journal article" date="2009" name="J. Neurol.">
        <title>Pompe disease in a Brazilian series: clinical and molecular analyses with identification of nine new mutations.</title>
        <authorList>
            <person name="Oba-Shinjo S.M."/>
            <person name="da Silva R."/>
            <person name="Andrade F.G."/>
            <person name="Palmer R.E."/>
            <person name="Pomponio R.J."/>
            <person name="Ciociola K.M."/>
            <person name="Carvalho S.M."/>
            <person name="Gutierrez P.S."/>
            <person name="Porta G."/>
            <person name="Marrone C.D."/>
            <person name="Munoz V."/>
            <person name="Grzesiuk A.K."/>
            <person name="Llerena J.C. Jr."/>
            <person name="Berditchevsky C.R."/>
            <person name="Sobreira C."/>
            <person name="Horovitz D."/>
            <person name="Hatem T.P."/>
            <person name="Frota E.R."/>
            <person name="Pecchini R."/>
            <person name="Kouyoumdjian J.A."/>
            <person name="Werneck L."/>
            <person name="Amado V.M."/>
            <person name="Camelo J.S. Jr."/>
            <person name="Mattaliano R.J."/>
            <person name="Marie S.K."/>
        </authorList>
    </citation>
    <scope>VARIANTS POMPE PRO-46; LEU-217; PRO-486; PRO-594; TYR-612; LYS-635 AND VAL-638</scope>
</reference>
<reference key="57">
    <citation type="journal article" date="2010" name="J. Child Neurol.">
        <title>Screening of late-onset Pompe disease in a sample of Mexican patients with myopathies of unknown etiology: identification of a novel mutation in the acid alpha-glucosidase gene.</title>
        <authorList>
            <person name="Alcantara-Ortigoza M.A."/>
            <person name="Gonzalez-del Angel A."/>
            <person name="Barrientos-Rios R."/>
            <person name="Cupples C."/>
            <person name="Garrido-Garcia L.M."/>
            <person name="de Leon-Bojorge B."/>
            <person name="Alva-Chaire Adel C."/>
        </authorList>
    </citation>
    <scope>VARIANT POMPE SER-558</scope>
</reference>
<reference key="58">
    <citation type="journal article" date="2010" name="Mol. Genet. Metab.">
        <title>Genetic heterozygosity and pseudodeficiency in the Pompe disease newborn screening pilot program.</title>
        <authorList>
            <person name="Labrousse P."/>
            <person name="Chien Y.H."/>
            <person name="Pomponio R.J."/>
            <person name="Keutzer J."/>
            <person name="Lee N.C."/>
            <person name="Akmaev V.R."/>
            <person name="Scholl T."/>
            <person name="Hwu W.L."/>
        </authorList>
    </citation>
    <scope>VARIANTS POMPE PRO-224; LEU-251; LEU-254; LYS-262; SER-266; PRO-291; VAL-408; ARG-478; TYR-525; LEU-545; PHE-557; ARG-615; GLU-645; ARG-711; GLY-746 AND CYS-746</scope>
    <scope>VARIANT ALA-271</scope>
</reference>
<reference key="59">
    <citation type="journal article" date="2011" name="J. Neurol. Sci.">
        <title>Late form of Pompe disease with glycogen storage in peripheral nerves axons.</title>
        <authorList>
            <person name="Fidzianska A."/>
            <person name="Lugowska A."/>
            <person name="Tylki-Szymanska A."/>
        </authorList>
    </citation>
    <scope>VARIANT POMPE GLY-103</scope>
    <scope>VARIANT ASN-91</scope>
</reference>
<reference key="60">
    <citation type="journal article" date="2012" name="Hum. Mutat.">
        <title>Update of the pompe disease mutation database with 60 novel GAA sequence variants and additional studies on the functional effect of 34 previously reported variants.</title>
        <authorList>
            <person name="Kroos M."/>
            <person name="Hoogeveen-Westerveld M."/>
            <person name="Michelakakis H."/>
            <person name="Pomponio R."/>
            <person name="Van der Ploeg A."/>
            <person name="Halley D."/>
            <person name="Reuser A."/>
            <person name="Augoustides-Savvopoulou P."/>
            <person name="Ausems M."/>
            <person name="Llona J.B."/>
            <person name="Bautista Lorite J."/>
            <person name="van der Beek N."/>
            <person name="Bonafe L."/>
            <person name="Cuk M."/>
            <person name="D'Hooghe M."/>
            <person name="Engelen B."/>
            <person name="Farouk A."/>
            <person name="Fumic K."/>
            <person name="Garcia-Delgado E."/>
            <person name="Herzog A."/>
            <person name="Hurst J."/>
            <person name="Jones S."/>
            <person name="Kariminejad M.H."/>
            <person name="Kucukcongar A."/>
            <person name="Lissens W."/>
            <person name="Lund A."/>
            <person name="Majoor-Krakauer D."/>
            <person name="Kumamoto S."/>
            <person name="Maravi E."/>
            <person name="Marie S."/>
            <person name="Mengel E."/>
            <person name="Mavridou I."/>
            <person name="Munteis Olivas E."/>
            <person name="Najmabadi H."/>
            <person name="Okumiya T."/>
            <person name="Peric S."/>
            <person name="Paschke E."/>
            <person name="Plecko B."/>
            <person name="Robberecht W."/>
            <person name="Serdaroglu P."/>
            <person name="Shboul M."/>
            <person name="Tansek M.Z."/>
            <person name="Tarnutzer A."/>
            <person name="Stojanovic V.R."/>
            <person name="Tylki-Szymanska A."/>
            <person name="Venancio M."/>
            <person name="Verhoeven K."/>
        </authorList>
    </citation>
    <scope>VARIANTS HIS-74; LEU-220; MET-222; CYS-458; LEU-629 AND ILE-718</scope>
    <scope>VARIANTS POMPE HIS-89; ARG-103; GLY-108; PHE-127; GLN-224; ARG-234; LYS-234; ASP-290; GLY-310; ILE-316; GLU-335; LEU-361; VAL-391; LEU-397; VAL-419; HIS-457; TYR-523; SER-558; CYS-575; ARG-576; HIS-594; LEU-601; ALA-602; ASP-611; PRO-627; ASP-648; 700-THR-LEU-701 DEL; LEU-702; LYS-743; PRO-819 AND PHE-916</scope>
</reference>
<reference key="61">
    <citation type="journal article" date="2012" name="Orphanet J. Rare Dis.">
        <title>A cross-sectional single-centre study on the spectrum of Pompe disease, German patients: molecular analysis of the GAA gene, manifestation and genotype-phenotype correlations.</title>
        <authorList>
            <person name="Herzog A."/>
            <person name="Hartung R."/>
            <person name="Reuser A.J."/>
            <person name="Hermanns P."/>
            <person name="Runz H."/>
            <person name="Karabul N."/>
            <person name="Goekce S."/>
            <person name="Pohlenz J."/>
            <person name="Kampmann C."/>
            <person name="Lampe C."/>
            <person name="Beck M."/>
            <person name="Mengel E."/>
        </authorList>
    </citation>
    <scope>VARIANTS POMPE LYS-234; 431-LEU--GLN-433 DEL; LEU-568; LEU-601; CYS-766 AND ARG-913</scope>
</reference>
<reference key="62">
    <citation type="journal article" date="2015" name="Gene">
        <title>Novel GAA mutations in patients with Pompe disease.</title>
        <authorList>
            <person name="Turaca L.T."/>
            <person name="de Faria D.O."/>
            <person name="Kyosen S.O."/>
            <person name="Teixeira V.D."/>
            <person name="Motta F.L."/>
            <person name="Pessoa J.G."/>
            <person name="Rodrigues E Silva M."/>
            <person name="de Almeida S.S."/>
            <person name="D'Almeida V."/>
            <person name="Munoz Rojas M.V."/>
            <person name="Martins A.M."/>
            <person name="Pesquero J.B."/>
        </authorList>
    </citation>
    <scope>VARIANTS POMPE VAL-391; HIS-437; PRO-552; ASP-611; VAL-641; TRP-647 AND PRO-705</scope>
    <scope>VARIANTS ASN-91; ARG-199; HIS-223; SER-576; LYS-689; ILE-780 AND ILE-816</scope>
</reference>
<organism>
    <name type="scientific">Homo sapiens</name>
    <name type="common">Human</name>
    <dbReference type="NCBI Taxonomy" id="9606"/>
    <lineage>
        <taxon>Eukaryota</taxon>
        <taxon>Metazoa</taxon>
        <taxon>Chordata</taxon>
        <taxon>Craniata</taxon>
        <taxon>Vertebrata</taxon>
        <taxon>Euteleostomi</taxon>
        <taxon>Mammalia</taxon>
        <taxon>Eutheria</taxon>
        <taxon>Euarchontoglires</taxon>
        <taxon>Primates</taxon>
        <taxon>Haplorrhini</taxon>
        <taxon>Catarrhini</taxon>
        <taxon>Hominidae</taxon>
        <taxon>Homo</taxon>
    </lineage>
</organism>
<protein>
    <recommendedName>
        <fullName>Lysosomal alpha-glucosidase</fullName>
        <ecNumber evidence="29 30 43 46">3.2.1.20</ecNumber>
    </recommendedName>
    <alternativeName>
        <fullName>Acid maltase</fullName>
    </alternativeName>
    <alternativeName>
        <fullName>Aglucosidase alfa</fullName>
    </alternativeName>
    <component>
        <recommendedName>
            <fullName>76 kDa lysosomal alpha-glucosidase</fullName>
        </recommendedName>
    </component>
    <component>
        <recommendedName>
            <fullName>70 kDa lysosomal alpha-glucosidase</fullName>
        </recommendedName>
    </component>
</protein>
<dbReference type="EC" id="3.2.1.20" evidence="29 30 43 46"/>
<dbReference type="EMBL" id="Y00839">
    <property type="protein sequence ID" value="CAA68763.1"/>
    <property type="molecule type" value="mRNA"/>
</dbReference>
<dbReference type="EMBL" id="Y00839">
    <property type="protein sequence ID" value="CAA68764.1"/>
    <property type="molecule type" value="mRNA"/>
</dbReference>
<dbReference type="EMBL" id="X55080">
    <property type="protein sequence ID" value="CAC12967.1"/>
    <property type="molecule type" value="Genomic_DNA"/>
</dbReference>
<dbReference type="EMBL" id="X55081">
    <property type="protein sequence ID" value="CAC12967.1"/>
    <property type="status" value="JOINED"/>
    <property type="molecule type" value="Genomic_DNA"/>
</dbReference>
<dbReference type="EMBL" id="X55095">
    <property type="protein sequence ID" value="CAC12967.1"/>
    <property type="status" value="JOINED"/>
    <property type="molecule type" value="Genomic_DNA"/>
</dbReference>
<dbReference type="EMBL" id="X55082">
    <property type="protein sequence ID" value="CAC12967.1"/>
    <property type="status" value="JOINED"/>
    <property type="molecule type" value="Genomic_DNA"/>
</dbReference>
<dbReference type="EMBL" id="X55084">
    <property type="protein sequence ID" value="CAC12967.1"/>
    <property type="status" value="JOINED"/>
    <property type="molecule type" value="Genomic_DNA"/>
</dbReference>
<dbReference type="EMBL" id="X55083">
    <property type="protein sequence ID" value="CAC12967.1"/>
    <property type="status" value="JOINED"/>
    <property type="molecule type" value="Genomic_DNA"/>
</dbReference>
<dbReference type="EMBL" id="X55098">
    <property type="protein sequence ID" value="CAC12967.1"/>
    <property type="status" value="JOINED"/>
    <property type="molecule type" value="Genomic_DNA"/>
</dbReference>
<dbReference type="EMBL" id="X55085">
    <property type="protein sequence ID" value="CAC12967.1"/>
    <property type="status" value="JOINED"/>
    <property type="molecule type" value="Genomic_DNA"/>
</dbReference>
<dbReference type="EMBL" id="X55086">
    <property type="protein sequence ID" value="CAC12967.1"/>
    <property type="status" value="JOINED"/>
    <property type="molecule type" value="Genomic_DNA"/>
</dbReference>
<dbReference type="EMBL" id="X55087">
    <property type="protein sequence ID" value="CAC12967.1"/>
    <property type="status" value="JOINED"/>
    <property type="molecule type" value="Genomic_DNA"/>
</dbReference>
<dbReference type="EMBL" id="X55088">
    <property type="protein sequence ID" value="CAC12967.1"/>
    <property type="status" value="JOINED"/>
    <property type="molecule type" value="Genomic_DNA"/>
</dbReference>
<dbReference type="EMBL" id="X55089">
    <property type="protein sequence ID" value="CAC12967.1"/>
    <property type="status" value="JOINED"/>
    <property type="molecule type" value="Genomic_DNA"/>
</dbReference>
<dbReference type="EMBL" id="X55090">
    <property type="protein sequence ID" value="CAC12967.1"/>
    <property type="status" value="JOINED"/>
    <property type="molecule type" value="Genomic_DNA"/>
</dbReference>
<dbReference type="EMBL" id="X55096">
    <property type="protein sequence ID" value="CAC12967.1"/>
    <property type="status" value="JOINED"/>
    <property type="molecule type" value="Genomic_DNA"/>
</dbReference>
<dbReference type="EMBL" id="X55091">
    <property type="protein sequence ID" value="CAC12967.1"/>
    <property type="status" value="JOINED"/>
    <property type="molecule type" value="Genomic_DNA"/>
</dbReference>
<dbReference type="EMBL" id="X55092">
    <property type="protein sequence ID" value="CAC12967.1"/>
    <property type="status" value="JOINED"/>
    <property type="molecule type" value="Genomic_DNA"/>
</dbReference>
<dbReference type="EMBL" id="X55093">
    <property type="protein sequence ID" value="CAC12967.1"/>
    <property type="status" value="JOINED"/>
    <property type="molecule type" value="Genomic_DNA"/>
</dbReference>
<dbReference type="EMBL" id="X55094">
    <property type="protein sequence ID" value="CAC12967.1"/>
    <property type="status" value="JOINED"/>
    <property type="molecule type" value="Genomic_DNA"/>
</dbReference>
<dbReference type="EMBL" id="X55097">
    <property type="protein sequence ID" value="CAC12967.1"/>
    <property type="status" value="JOINED"/>
    <property type="molecule type" value="Genomic_DNA"/>
</dbReference>
<dbReference type="EMBL" id="M34424">
    <property type="protein sequence ID" value="AAA52506.1"/>
    <property type="molecule type" value="mRNA"/>
</dbReference>
<dbReference type="EMBL" id="DQ907243">
    <property type="protein sequence ID" value="ABI53718.1"/>
    <property type="molecule type" value="mRNA"/>
</dbReference>
<dbReference type="EMBL" id="AC087741">
    <property type="status" value="NOT_ANNOTATED_CDS"/>
    <property type="molecule type" value="Genomic_DNA"/>
</dbReference>
<dbReference type="EMBL" id="BC040431">
    <property type="protein sequence ID" value="AAH40431.1"/>
    <property type="molecule type" value="mRNA"/>
</dbReference>
<dbReference type="EMBL" id="S76893">
    <property type="protein sequence ID" value="AAB33842.1"/>
    <property type="molecule type" value="mRNA"/>
</dbReference>
<dbReference type="CCDS" id="CCDS32760.1"/>
<dbReference type="PIR" id="A40577">
    <property type="entry name" value="A32609"/>
</dbReference>
<dbReference type="RefSeq" id="NP_000143.2">
    <property type="nucleotide sequence ID" value="NM_000152.5"/>
</dbReference>
<dbReference type="RefSeq" id="NP_001073271.1">
    <property type="nucleotide sequence ID" value="NM_001079803.3"/>
</dbReference>
<dbReference type="RefSeq" id="NP_001073272.1">
    <property type="nucleotide sequence ID" value="NM_001079804.3"/>
</dbReference>
<dbReference type="RefSeq" id="NP_001393670.1">
    <property type="nucleotide sequence ID" value="NM_001406741.1"/>
</dbReference>
<dbReference type="RefSeq" id="NP_001393671.1">
    <property type="nucleotide sequence ID" value="NM_001406742.1"/>
</dbReference>
<dbReference type="RefSeq" id="XP_005257250.1">
    <property type="nucleotide sequence ID" value="XM_005257193.2"/>
</dbReference>
<dbReference type="RefSeq" id="XP_005257251.1">
    <property type="nucleotide sequence ID" value="XM_005257194.4"/>
</dbReference>
<dbReference type="RefSeq" id="XP_047291675.1">
    <property type="nucleotide sequence ID" value="XM_047435719.1"/>
</dbReference>
<dbReference type="RefSeq" id="XP_054189174.1">
    <property type="nucleotide sequence ID" value="XM_054333199.1"/>
</dbReference>
<dbReference type="PDB" id="5KZW">
    <property type="method" value="X-ray"/>
    <property type="resolution" value="2.00 A"/>
    <property type="chains" value="A=79-952"/>
</dbReference>
<dbReference type="PDB" id="5KZX">
    <property type="method" value="X-ray"/>
    <property type="resolution" value="2.00 A"/>
    <property type="chains" value="A=79-952"/>
</dbReference>
<dbReference type="PDB" id="5NN3">
    <property type="method" value="X-ray"/>
    <property type="resolution" value="1.90 A"/>
    <property type="chains" value="A=81-952"/>
</dbReference>
<dbReference type="PDB" id="5NN4">
    <property type="method" value="X-ray"/>
    <property type="resolution" value="1.83 A"/>
    <property type="chains" value="A=81-952"/>
</dbReference>
<dbReference type="PDB" id="5NN5">
    <property type="method" value="X-ray"/>
    <property type="resolution" value="2.00 A"/>
    <property type="chains" value="A=81-952"/>
</dbReference>
<dbReference type="PDB" id="5NN6">
    <property type="method" value="X-ray"/>
    <property type="resolution" value="2.00 A"/>
    <property type="chains" value="A=81-952"/>
</dbReference>
<dbReference type="PDB" id="5NN8">
    <property type="method" value="X-ray"/>
    <property type="resolution" value="2.45 A"/>
    <property type="chains" value="A=81-952"/>
</dbReference>
<dbReference type="PDB" id="7P2Z">
    <property type="method" value="X-ray"/>
    <property type="resolution" value="1.85 A"/>
    <property type="chains" value="AAA/AaA=81-952"/>
</dbReference>
<dbReference type="PDB" id="7P32">
    <property type="method" value="X-ray"/>
    <property type="resolution" value="1.82 A"/>
    <property type="chains" value="AAA=81-952"/>
</dbReference>
<dbReference type="PDBsum" id="5KZW"/>
<dbReference type="PDBsum" id="5KZX"/>
<dbReference type="PDBsum" id="5NN3"/>
<dbReference type="PDBsum" id="5NN4"/>
<dbReference type="PDBsum" id="5NN5"/>
<dbReference type="PDBsum" id="5NN6"/>
<dbReference type="PDBsum" id="5NN8"/>
<dbReference type="PDBsum" id="7P2Z"/>
<dbReference type="PDBsum" id="7P32"/>
<dbReference type="SMR" id="P10253"/>
<dbReference type="BioGRID" id="108823">
    <property type="interactions" value="131"/>
</dbReference>
<dbReference type="FunCoup" id="P10253">
    <property type="interactions" value="652"/>
</dbReference>
<dbReference type="IntAct" id="P10253">
    <property type="interactions" value="85"/>
</dbReference>
<dbReference type="MINT" id="P10253"/>
<dbReference type="STRING" id="9606.ENSP00000305692"/>
<dbReference type="BindingDB" id="P10253"/>
<dbReference type="ChEMBL" id="CHEMBL2608"/>
<dbReference type="DrugBank" id="DB01841">
    <property type="generic name" value="4,6-Dideoxyglucose"/>
</dbReference>
<dbReference type="DrugBank" id="DB00284">
    <property type="generic name" value="Acarbose"/>
</dbReference>
<dbReference type="DrugBank" id="DB14109">
    <property type="generic name" value="alpha-Arbutin"/>
</dbReference>
<dbReference type="DrugBank" id="DB06645">
    <property type="generic name" value="Anamorelin"/>
</dbReference>
<dbReference type="DrugBank" id="DB05200">
    <property type="generic name" value="AT2220"/>
</dbReference>
<dbReference type="DrugBank" id="DB02379">
    <property type="generic name" value="Beta-D-Glucose"/>
</dbReference>
<dbReference type="DrugBank" id="DB03206">
    <property type="generic name" value="Duvoglustat"/>
</dbReference>
<dbReference type="DrugBank" id="DB09526">
    <property type="generic name" value="Hydroquinone"/>
</dbReference>
<dbReference type="DrugBank" id="DB00491">
    <property type="generic name" value="Miglitol"/>
</dbReference>
<dbReference type="DrugBank" id="DB14128">
    <property type="generic name" value="Nadide"/>
</dbReference>
<dbReference type="DrugBank" id="DB14962">
    <property type="generic name" value="Trastuzumab deruxtecan"/>
</dbReference>
<dbReference type="DrugCentral" id="P10253"/>
<dbReference type="GuidetoPHARMACOLOGY" id="2611"/>
<dbReference type="Allergome" id="9614">
    <property type="allergen name" value="Hom s Glucosidase"/>
</dbReference>
<dbReference type="CAZy" id="GH31">
    <property type="family name" value="Glycoside Hydrolase Family 31"/>
</dbReference>
<dbReference type="GlyConnect" id="723">
    <property type="glycosylation" value="17 N-Linked glycans (7 sites)"/>
</dbReference>
<dbReference type="GlyCosmos" id="P10253">
    <property type="glycosylation" value="10 sites, 27 glycans"/>
</dbReference>
<dbReference type="GlyGen" id="P10253">
    <property type="glycosylation" value="21 sites, 81 N-linked glycans (7 sites), 2 N-linked;o-linked glycans (3 sites), 2 O-linked glycans (11 sites)"/>
</dbReference>
<dbReference type="iPTMnet" id="P10253"/>
<dbReference type="MetOSite" id="P10253"/>
<dbReference type="PhosphoSitePlus" id="P10253"/>
<dbReference type="SwissPalm" id="P10253"/>
<dbReference type="BioMuta" id="GAA"/>
<dbReference type="DMDM" id="317373572"/>
<dbReference type="CPTAC" id="CPTAC-2224"/>
<dbReference type="jPOST" id="P10253"/>
<dbReference type="MassIVE" id="P10253"/>
<dbReference type="PaxDb" id="9606-ENSP00000305692"/>
<dbReference type="PeptideAtlas" id="P10253"/>
<dbReference type="ProteomicsDB" id="52587"/>
<dbReference type="Pumba" id="P10253"/>
<dbReference type="Antibodypedia" id="32676">
    <property type="antibodies" value="335 antibodies from 35 providers"/>
</dbReference>
<dbReference type="DNASU" id="2548"/>
<dbReference type="Ensembl" id="ENST00000302262.8">
    <property type="protein sequence ID" value="ENSP00000305692.3"/>
    <property type="gene ID" value="ENSG00000171298.15"/>
</dbReference>
<dbReference type="Ensembl" id="ENST00000390015.7">
    <property type="protein sequence ID" value="ENSP00000374665.3"/>
    <property type="gene ID" value="ENSG00000171298.15"/>
</dbReference>
<dbReference type="Ensembl" id="ENST00000570803.6">
    <property type="protein sequence ID" value="ENSP00000460543.2"/>
    <property type="gene ID" value="ENSG00000171298.15"/>
</dbReference>
<dbReference type="Ensembl" id="ENST00000577106.6">
    <property type="protein sequence ID" value="ENSP00000458306.2"/>
    <property type="gene ID" value="ENSG00000171298.15"/>
</dbReference>
<dbReference type="Ensembl" id="ENST00000707779.1">
    <property type="protein sequence ID" value="ENSP00000516980.1"/>
    <property type="gene ID" value="ENSG00000291507.1"/>
</dbReference>
<dbReference type="Ensembl" id="ENST00000707781.1">
    <property type="protein sequence ID" value="ENSP00000516982.1"/>
    <property type="gene ID" value="ENSG00000291507.1"/>
</dbReference>
<dbReference type="Ensembl" id="ENST00000714057.1">
    <property type="protein sequence ID" value="ENSP00000519347.1"/>
    <property type="gene ID" value="ENSG00000171298.15"/>
</dbReference>
<dbReference type="Ensembl" id="ENST00000714058.1">
    <property type="protein sequence ID" value="ENSP00000519348.1"/>
    <property type="gene ID" value="ENSG00000171298.15"/>
</dbReference>
<dbReference type="GeneID" id="2548"/>
<dbReference type="KEGG" id="hsa:2548"/>
<dbReference type="MANE-Select" id="ENST00000302262.8">
    <property type="protein sequence ID" value="ENSP00000305692.3"/>
    <property type="RefSeq nucleotide sequence ID" value="NM_000152.5"/>
    <property type="RefSeq protein sequence ID" value="NP_000143.2"/>
</dbReference>
<dbReference type="UCSC" id="uc002jxo.4">
    <property type="organism name" value="human"/>
</dbReference>
<dbReference type="AGR" id="HGNC:4065"/>
<dbReference type="CTD" id="2548"/>
<dbReference type="DisGeNET" id="2548"/>
<dbReference type="GeneCards" id="GAA"/>
<dbReference type="GeneReviews" id="GAA"/>
<dbReference type="HGNC" id="HGNC:4065">
    <property type="gene designation" value="GAA"/>
</dbReference>
<dbReference type="HPA" id="ENSG00000171298">
    <property type="expression patterns" value="Low tissue specificity"/>
</dbReference>
<dbReference type="MalaCards" id="GAA"/>
<dbReference type="MIM" id="232300">
    <property type="type" value="phenotype"/>
</dbReference>
<dbReference type="MIM" id="606800">
    <property type="type" value="gene"/>
</dbReference>
<dbReference type="neXtProt" id="NX_P10253"/>
<dbReference type="OpenTargets" id="ENSG00000171298"/>
<dbReference type="Orphanet" id="308552">
    <property type="disease" value="Glycogen storage disease due to acid maltase deficiency, infantile onset"/>
</dbReference>
<dbReference type="Orphanet" id="420429">
    <property type="disease" value="Glycogen storage disease due to acid maltase deficiency, late-onset"/>
</dbReference>
<dbReference type="PharmGKB" id="PA28476"/>
<dbReference type="VEuPathDB" id="HostDB:ENSG00000171298"/>
<dbReference type="eggNOG" id="KOG1065">
    <property type="taxonomic scope" value="Eukaryota"/>
</dbReference>
<dbReference type="GeneTree" id="ENSGT00940000159355"/>
<dbReference type="HOGENOM" id="CLU_000631_11_2_1"/>
<dbReference type="InParanoid" id="P10253"/>
<dbReference type="OMA" id="YKGAVWP"/>
<dbReference type="OrthoDB" id="5839090at2759"/>
<dbReference type="PAN-GO" id="P10253">
    <property type="GO annotations" value="3 GO annotations based on evolutionary models"/>
</dbReference>
<dbReference type="PhylomeDB" id="P10253"/>
<dbReference type="TreeFam" id="TF314577"/>
<dbReference type="BRENDA" id="3.2.1.20">
    <property type="organism ID" value="2681"/>
</dbReference>
<dbReference type="PathwayCommons" id="P10253"/>
<dbReference type="Reactome" id="R-HSA-5357609">
    <property type="pathway name" value="Glycogen storage disease type II (GAA)"/>
</dbReference>
<dbReference type="Reactome" id="R-HSA-6798695">
    <property type="pathway name" value="Neutrophil degranulation"/>
</dbReference>
<dbReference type="Reactome" id="R-HSA-70221">
    <property type="pathway name" value="Glycogen breakdown (glycogenolysis)"/>
</dbReference>
<dbReference type="SignaLink" id="P10253"/>
<dbReference type="SIGNOR" id="P10253"/>
<dbReference type="BioGRID-ORCS" id="2548">
    <property type="hits" value="12 hits in 1155 CRISPR screens"/>
</dbReference>
<dbReference type="ChiTaRS" id="GAA">
    <property type="organism name" value="human"/>
</dbReference>
<dbReference type="GeneWiki" id="Acid_alpha-glucosidase"/>
<dbReference type="GenomeRNAi" id="2548"/>
<dbReference type="Pharos" id="P10253">
    <property type="development level" value="Tclin"/>
</dbReference>
<dbReference type="PRO" id="PR:P10253"/>
<dbReference type="Proteomes" id="UP000005640">
    <property type="component" value="Chromosome 17"/>
</dbReference>
<dbReference type="RNAct" id="P10253">
    <property type="molecule type" value="protein"/>
</dbReference>
<dbReference type="Bgee" id="ENSG00000171298">
    <property type="expression patterns" value="Expressed in granulocyte and 177 other cell types or tissues"/>
</dbReference>
<dbReference type="ExpressionAtlas" id="P10253">
    <property type="expression patterns" value="baseline and differential"/>
</dbReference>
<dbReference type="GO" id="GO:0120282">
    <property type="term" value="C:autolysosome lumen"/>
    <property type="evidence" value="ECO:0007669"/>
    <property type="project" value="Ensembl"/>
</dbReference>
<dbReference type="GO" id="GO:0035577">
    <property type="term" value="C:azurophil granule membrane"/>
    <property type="evidence" value="ECO:0000304"/>
    <property type="project" value="Reactome"/>
</dbReference>
<dbReference type="GO" id="GO:0070062">
    <property type="term" value="C:extracellular exosome"/>
    <property type="evidence" value="ECO:0007005"/>
    <property type="project" value="UniProtKB"/>
</dbReference>
<dbReference type="GO" id="GO:0101003">
    <property type="term" value="C:ficolin-1-rich granule membrane"/>
    <property type="evidence" value="ECO:0000304"/>
    <property type="project" value="Reactome"/>
</dbReference>
<dbReference type="GO" id="GO:0043231">
    <property type="term" value="C:intracellular membrane-bounded organelle"/>
    <property type="evidence" value="ECO:0000314"/>
    <property type="project" value="HPA"/>
</dbReference>
<dbReference type="GO" id="GO:0043202">
    <property type="term" value="C:lysosomal lumen"/>
    <property type="evidence" value="ECO:0000304"/>
    <property type="project" value="Reactome"/>
</dbReference>
<dbReference type="GO" id="GO:0005765">
    <property type="term" value="C:lysosomal membrane"/>
    <property type="evidence" value="ECO:0007005"/>
    <property type="project" value="UniProtKB"/>
</dbReference>
<dbReference type="GO" id="GO:0005764">
    <property type="term" value="C:lysosome"/>
    <property type="evidence" value="ECO:0000314"/>
    <property type="project" value="BHF-UCL"/>
</dbReference>
<dbReference type="GO" id="GO:0016020">
    <property type="term" value="C:membrane"/>
    <property type="evidence" value="ECO:0007005"/>
    <property type="project" value="UniProtKB"/>
</dbReference>
<dbReference type="GO" id="GO:0005886">
    <property type="term" value="C:plasma membrane"/>
    <property type="evidence" value="ECO:0000304"/>
    <property type="project" value="Reactome"/>
</dbReference>
<dbReference type="GO" id="GO:0070821">
    <property type="term" value="C:tertiary granule membrane"/>
    <property type="evidence" value="ECO:0000304"/>
    <property type="project" value="Reactome"/>
</dbReference>
<dbReference type="GO" id="GO:0004558">
    <property type="term" value="F:alpha-1,4-glucosidase activity"/>
    <property type="evidence" value="ECO:0000314"/>
    <property type="project" value="UniProtKB"/>
</dbReference>
<dbReference type="GO" id="GO:0090599">
    <property type="term" value="F:alpha-glucosidase activity"/>
    <property type="evidence" value="ECO:0000269"/>
    <property type="project" value="Reactome"/>
</dbReference>
<dbReference type="GO" id="GO:0030246">
    <property type="term" value="F:carbohydrate binding"/>
    <property type="evidence" value="ECO:0007669"/>
    <property type="project" value="InterPro"/>
</dbReference>
<dbReference type="GO" id="GO:0035904">
    <property type="term" value="P:aorta development"/>
    <property type="evidence" value="ECO:0007669"/>
    <property type="project" value="Ensembl"/>
</dbReference>
<dbReference type="GO" id="GO:0060048">
    <property type="term" value="P:cardiac muscle contraction"/>
    <property type="evidence" value="ECO:0000315"/>
    <property type="project" value="BHF-UCL"/>
</dbReference>
<dbReference type="GO" id="GO:0002086">
    <property type="term" value="P:diaphragm contraction"/>
    <property type="evidence" value="ECO:0000315"/>
    <property type="project" value="BHF-UCL"/>
</dbReference>
<dbReference type="GO" id="GO:0006006">
    <property type="term" value="P:glucose metabolic process"/>
    <property type="evidence" value="ECO:0000305"/>
    <property type="project" value="BHF-UCL"/>
</dbReference>
<dbReference type="GO" id="GO:0005980">
    <property type="term" value="P:glycogen catabolic process"/>
    <property type="evidence" value="ECO:0000314"/>
    <property type="project" value="UniProtKB"/>
</dbReference>
<dbReference type="GO" id="GO:0061723">
    <property type="term" value="P:glycophagy"/>
    <property type="evidence" value="ECO:0007669"/>
    <property type="project" value="Ensembl"/>
</dbReference>
<dbReference type="GO" id="GO:0003007">
    <property type="term" value="P:heart morphogenesis"/>
    <property type="evidence" value="ECO:0007669"/>
    <property type="project" value="Ensembl"/>
</dbReference>
<dbReference type="GO" id="GO:0007626">
    <property type="term" value="P:locomotory behavior"/>
    <property type="evidence" value="ECO:0007669"/>
    <property type="project" value="Ensembl"/>
</dbReference>
<dbReference type="GO" id="GO:0007040">
    <property type="term" value="P:lysosome organization"/>
    <property type="evidence" value="ECO:0000315"/>
    <property type="project" value="BHF-UCL"/>
</dbReference>
<dbReference type="GO" id="GO:0000023">
    <property type="term" value="P:maltose metabolic process"/>
    <property type="evidence" value="ECO:0000305"/>
    <property type="project" value="BHF-UCL"/>
</dbReference>
<dbReference type="GO" id="GO:0046716">
    <property type="term" value="P:muscle cell cellular homeostasis"/>
    <property type="evidence" value="ECO:0007669"/>
    <property type="project" value="Ensembl"/>
</dbReference>
<dbReference type="GO" id="GO:0050885">
    <property type="term" value="P:neuromuscular process controlling balance"/>
    <property type="evidence" value="ECO:0007669"/>
    <property type="project" value="Ensembl"/>
</dbReference>
<dbReference type="GO" id="GO:0050884">
    <property type="term" value="P:neuromuscular process controlling posture"/>
    <property type="evidence" value="ECO:0007669"/>
    <property type="project" value="Ensembl"/>
</dbReference>
<dbReference type="GO" id="GO:0002026">
    <property type="term" value="P:regulation of the force of heart contraction"/>
    <property type="evidence" value="ECO:0007669"/>
    <property type="project" value="Ensembl"/>
</dbReference>
<dbReference type="GO" id="GO:0005985">
    <property type="term" value="P:sucrose metabolic process"/>
    <property type="evidence" value="ECO:0000305"/>
    <property type="project" value="BHF-UCL"/>
</dbReference>
<dbReference type="GO" id="GO:0009888">
    <property type="term" value="P:tissue development"/>
    <property type="evidence" value="ECO:0007669"/>
    <property type="project" value="Ensembl"/>
</dbReference>
<dbReference type="GO" id="GO:0043181">
    <property type="term" value="P:vacuolar sequestering"/>
    <property type="evidence" value="ECO:0000315"/>
    <property type="project" value="BHF-UCL"/>
</dbReference>
<dbReference type="CDD" id="cd06602">
    <property type="entry name" value="GH31_MGAM_SI_GAA"/>
    <property type="match status" value="1"/>
</dbReference>
<dbReference type="CDD" id="cd14752">
    <property type="entry name" value="GH31_N"/>
    <property type="match status" value="1"/>
</dbReference>
<dbReference type="CDD" id="cd00111">
    <property type="entry name" value="Trefoil"/>
    <property type="match status" value="1"/>
</dbReference>
<dbReference type="FunFam" id="4.10.110.10:FF:000007">
    <property type="entry name" value="Lysosomal alpha-glucosidase"/>
    <property type="match status" value="1"/>
</dbReference>
<dbReference type="FunFam" id="3.20.20.80:FF:000072">
    <property type="entry name" value="lysosomal alpha-glucosidase isoform X2"/>
    <property type="match status" value="1"/>
</dbReference>
<dbReference type="FunFam" id="2.60.40.1180:FF:000001">
    <property type="entry name" value="Maltase-glucoamylase, intestinal"/>
    <property type="match status" value="1"/>
</dbReference>
<dbReference type="FunFam" id="2.60.40.1180:FF:000005">
    <property type="entry name" value="Maltase-glucoamylase, intestinal"/>
    <property type="match status" value="1"/>
</dbReference>
<dbReference type="FunFam" id="2.60.40.1760:FF:000001">
    <property type="entry name" value="Maltase-glucoamylase, intestinal"/>
    <property type="match status" value="1"/>
</dbReference>
<dbReference type="Gene3D" id="3.20.20.80">
    <property type="entry name" value="Glycosidases"/>
    <property type="match status" value="1"/>
</dbReference>
<dbReference type="Gene3D" id="2.60.40.1760">
    <property type="entry name" value="glycosyl hydrolase (family 31)"/>
    <property type="match status" value="1"/>
</dbReference>
<dbReference type="Gene3D" id="2.60.40.1180">
    <property type="entry name" value="Golgi alpha-mannosidase II"/>
    <property type="match status" value="2"/>
</dbReference>
<dbReference type="Gene3D" id="4.10.110.10">
    <property type="entry name" value="Spasmolytic Protein, domain 1"/>
    <property type="match status" value="1"/>
</dbReference>
<dbReference type="InterPro" id="IPR011013">
    <property type="entry name" value="Gal_mutarotase_sf_dom"/>
</dbReference>
<dbReference type="InterPro" id="IPR030458">
    <property type="entry name" value="Glyco_hydro_31_AS"/>
</dbReference>
<dbReference type="InterPro" id="IPR048395">
    <property type="entry name" value="Glyco_hydro_31_C"/>
</dbReference>
<dbReference type="InterPro" id="IPR030459">
    <property type="entry name" value="Glyco_hydro_31_CS"/>
</dbReference>
<dbReference type="InterPro" id="IPR025887">
    <property type="entry name" value="Glyco_hydro_31_N_dom"/>
</dbReference>
<dbReference type="InterPro" id="IPR000322">
    <property type="entry name" value="Glyco_hydro_31_TIM"/>
</dbReference>
<dbReference type="InterPro" id="IPR013780">
    <property type="entry name" value="Glyco_hydro_b"/>
</dbReference>
<dbReference type="InterPro" id="IPR017853">
    <property type="entry name" value="Glycoside_hydrolase_SF"/>
</dbReference>
<dbReference type="InterPro" id="IPR017957">
    <property type="entry name" value="P_trefoil_CS"/>
</dbReference>
<dbReference type="InterPro" id="IPR000519">
    <property type="entry name" value="P_trefoil_dom"/>
</dbReference>
<dbReference type="InterPro" id="IPR044913">
    <property type="entry name" value="P_trefoil_dom_sf"/>
</dbReference>
<dbReference type="PANTHER" id="PTHR22762">
    <property type="entry name" value="ALPHA-GLUCOSIDASE"/>
    <property type="match status" value="1"/>
</dbReference>
<dbReference type="PANTHER" id="PTHR22762:SF92">
    <property type="entry name" value="LYSOSOMAL ALPHA-GLUCOSIDASE"/>
    <property type="match status" value="1"/>
</dbReference>
<dbReference type="Pfam" id="PF13802">
    <property type="entry name" value="Gal_mutarotas_2"/>
    <property type="match status" value="1"/>
</dbReference>
<dbReference type="Pfam" id="PF01055">
    <property type="entry name" value="Glyco_hydro_31_2nd"/>
    <property type="match status" value="1"/>
</dbReference>
<dbReference type="Pfam" id="PF21365">
    <property type="entry name" value="Glyco_hydro_31_3rd"/>
    <property type="match status" value="1"/>
</dbReference>
<dbReference type="Pfam" id="PF00088">
    <property type="entry name" value="Trefoil"/>
    <property type="match status" value="1"/>
</dbReference>
<dbReference type="SMART" id="SM00018">
    <property type="entry name" value="PD"/>
    <property type="match status" value="1"/>
</dbReference>
<dbReference type="SUPFAM" id="SSF51445">
    <property type="entry name" value="(Trans)glycosidases"/>
    <property type="match status" value="1"/>
</dbReference>
<dbReference type="SUPFAM" id="SSF74650">
    <property type="entry name" value="Galactose mutarotase-like"/>
    <property type="match status" value="1"/>
</dbReference>
<dbReference type="SUPFAM" id="SSF51011">
    <property type="entry name" value="Glycosyl hydrolase domain"/>
    <property type="match status" value="1"/>
</dbReference>
<dbReference type="SUPFAM" id="SSF57492">
    <property type="entry name" value="Trefoil"/>
    <property type="match status" value="1"/>
</dbReference>
<dbReference type="PROSITE" id="PS00129">
    <property type="entry name" value="GLYCOSYL_HYDROL_F31_1"/>
    <property type="match status" value="1"/>
</dbReference>
<dbReference type="PROSITE" id="PS00707">
    <property type="entry name" value="GLYCOSYL_HYDROL_F31_2"/>
    <property type="match status" value="1"/>
</dbReference>
<dbReference type="PROSITE" id="PS00025">
    <property type="entry name" value="P_TREFOIL_1"/>
    <property type="match status" value="1"/>
</dbReference>
<dbReference type="PROSITE" id="PS51448">
    <property type="entry name" value="P_TREFOIL_2"/>
    <property type="match status" value="1"/>
</dbReference>
<feature type="signal peptide" evidence="2">
    <location>
        <begin position="1"/>
        <end position="27"/>
    </location>
</feature>
<feature type="propeptide" id="PRO_0000018565" evidence="44">
    <location>
        <begin position="28"/>
        <end position="69"/>
    </location>
</feature>
<feature type="chain" id="PRO_0000018566" description="Lysosomal alpha-glucosidase">
    <location>
        <begin position="70"/>
        <end position="952"/>
    </location>
</feature>
<feature type="chain" id="PRO_0000018567" description="76 kDa lysosomal alpha-glucosidase">
    <location>
        <begin position="123"/>
        <end position="952"/>
    </location>
</feature>
<feature type="chain" id="PRO_0000018568" description="70 kDa lysosomal alpha-glucosidase">
    <location>
        <begin position="204"/>
        <end position="952"/>
    </location>
</feature>
<feature type="domain" description="P-type" evidence="3">
    <location>
        <begin position="80"/>
        <end position="131"/>
    </location>
</feature>
<feature type="region of interest" description="Disordered" evidence="5">
    <location>
        <begin position="47"/>
        <end position="82"/>
    </location>
</feature>
<feature type="active site" description="Nucleophile" evidence="4 30 62">
    <location>
        <position position="518"/>
    </location>
</feature>
<feature type="active site" evidence="1">
    <location>
        <position position="521"/>
    </location>
</feature>
<feature type="binding site" evidence="62">
    <location>
        <position position="404"/>
    </location>
    <ligand>
        <name>substrate</name>
    </ligand>
</feature>
<feature type="binding site" evidence="62">
    <location>
        <position position="600"/>
    </location>
    <ligand>
        <name>substrate</name>
    </ligand>
</feature>
<feature type="binding site" evidence="62">
    <location>
        <position position="616"/>
    </location>
    <ligand>
        <name>substrate</name>
    </ligand>
</feature>
<feature type="binding site" evidence="62">
    <location>
        <position position="674"/>
    </location>
    <ligand>
        <name>substrate</name>
    </ligand>
</feature>
<feature type="glycosylation site" description="N-linked (GlcNAc...) asparagine" evidence="32 43 52 59 63 65">
    <location>
        <position position="140"/>
    </location>
</feature>
<feature type="glycosylation site" description="N-linked (GlcNAc...) asparagine" evidence="43 52 59 63 65">
    <location>
        <position position="233"/>
    </location>
</feature>
<feature type="glycosylation site" description="N-linked (GlcNAc...) asparagine" evidence="20 43 52 59 63 65">
    <location>
        <position position="390"/>
    </location>
</feature>
<feature type="glycosylation site" description="N-linked (GlcNAc...) asparagine" evidence="13 32 43 52 59 63 65">
    <location>
        <position position="470"/>
    </location>
</feature>
<feature type="glycosylation site" description="N-linked (GlcNAc...) asparagine" evidence="43 52 59 63 65">
    <location>
        <position position="652"/>
    </location>
</feature>
<feature type="glycosylation site" description="N-linked (GlcNAc...) asparagine" evidence="32 43 52 59 63 65">
    <location>
        <position position="882"/>
    </location>
</feature>
<feature type="glycosylation site" description="N-linked (GlcNAc...) asparagine" evidence="32 52">
    <location>
        <position position="925"/>
    </location>
</feature>
<feature type="disulfide bond" evidence="3 43 59 63 64 65 66 67 68 69">
    <location>
        <begin position="82"/>
        <end position="109"/>
    </location>
</feature>
<feature type="disulfide bond" evidence="3 43 59 63 64 65 66 67 68 69">
    <location>
        <begin position="92"/>
        <end position="108"/>
    </location>
</feature>
<feature type="disulfide bond" evidence="3 43 59 63 64 65 66 67 68 69">
    <location>
        <begin position="103"/>
        <end position="127"/>
    </location>
</feature>
<feature type="disulfide bond" evidence="43 59 63 64 65 66 67 68 69">
    <location>
        <begin position="533"/>
        <end position="558"/>
    </location>
</feature>
<feature type="disulfide bond" evidence="43 59 63 64 65 66 67 68 69">
    <location>
        <begin position="647"/>
        <end position="658"/>
    </location>
</feature>
<feature type="sequence variant" id="VAR_068564" description="In POMPE; dbSNP:rs777215354." evidence="33">
    <original>S</original>
    <variation>P</variation>
    <location>
        <position position="46"/>
    </location>
</feature>
<feature type="sequence variant" id="VAR_068565" description="In dbSNP:rs764797280." evidence="39">
    <original>R</original>
    <variation>H</variation>
    <location>
        <position position="74"/>
    </location>
</feature>
<feature type="sequence variant" id="VAR_068566" description="In POMPE; uncertain significance; dbSNP:rs200586324." evidence="39">
    <original>R</original>
    <variation>H</variation>
    <location>
        <position position="89"/>
    </location>
</feature>
<feature type="sequence variant" id="VAR_004285" description="In allele GAA*2; lower affinity for glycogen and starch but not for lower-molecular weight substrates; dbSNP:rs1800299." evidence="36 38 42 56">
    <original>D</original>
    <variation>N</variation>
    <location>
        <position position="91"/>
    </location>
</feature>
<feature type="sequence variant" id="VAR_018078" description="In POMPE; infantile form; severe; loss of activity; shows enzyme localization primarily in the ER-Golgi compartment suggesting that mutation could affect the normal processing and stability of the enzyme; dbSNP:rs398123174." evidence="16 29 36">
    <original>C</original>
    <variation>G</variation>
    <location>
        <position position="103"/>
    </location>
</feature>
<feature type="sequence variant" id="VAR_068567" description="In POMPE." evidence="39">
    <original>C</original>
    <variation>R</variation>
    <location>
        <position position="103"/>
    </location>
</feature>
<feature type="sequence variant" id="VAR_068568" description="In POMPE." evidence="39">
    <original>C</original>
    <variation>G</variation>
    <location>
        <position position="108"/>
    </location>
</feature>
<feature type="sequence variant" id="VAR_068569" description="In POMPE." evidence="39">
    <original>C</original>
    <variation>F</variation>
    <location>
        <position position="127"/>
    </location>
</feature>
<feature type="sequence variant" id="VAR_068570" description="In POMPE; dbSNP:rs528367092." evidence="28">
    <original>R</original>
    <variation>H</variation>
    <location>
        <position position="190"/>
    </location>
</feature>
<feature type="sequence variant" id="VAR_046467" description="In POMPE; extremely low residual enzymatic activity." evidence="29">
    <original>Y</original>
    <variation>C</variation>
    <location>
        <position position="191"/>
    </location>
</feature>
<feature type="sequence variant" id="VAR_004286" description="In dbSNP:rs1042393." evidence="42 44 46 56 60">
    <original>H</original>
    <variation>R</variation>
    <location>
        <position position="199"/>
    </location>
</feature>
<feature type="sequence variant" id="VAR_029025" description="In POMPE." evidence="10">
    <original>L</original>
    <variation>P</variation>
    <location>
        <position position="208"/>
    </location>
</feature>
<feature type="sequence variant" id="VAR_068571" description="In POMPE." evidence="33">
    <original>P</original>
    <variation>L</variation>
    <location>
        <position position="217"/>
    </location>
</feature>
<feature type="sequence variant" id="VAR_018079" description="In POMPE; infantile form; severe; loss of activity; dbSNP:rs370950728." evidence="11 16 29">
    <original>G</original>
    <variation>R</variation>
    <location>
        <position position="219"/>
    </location>
</feature>
<feature type="sequence variant" id="VAR_068572" description="In dbSNP:rs530478036." evidence="39">
    <original>V</original>
    <variation>L</variation>
    <location>
        <position position="220"/>
    </location>
</feature>
<feature type="sequence variant" id="VAR_068573" description="In dbSNP:rs374569672." evidence="39">
    <original>V</original>
    <variation>M</variation>
    <location>
        <position position="222"/>
    </location>
</feature>
<feature type="sequence variant" id="VAR_004287" description="In dbSNP:rs1042395." evidence="42 44 46 56 60">
    <original>R</original>
    <variation>H</variation>
    <location>
        <position position="223"/>
    </location>
</feature>
<feature type="sequence variant" id="VAR_068574" description="In POMPE; dbSNP:rs200210219." evidence="34">
    <original>R</original>
    <variation>P</variation>
    <location>
        <position position="224"/>
    </location>
</feature>
<feature type="sequence variant" id="VAR_068575" description="In POMPE; dbSNP:rs200210219." evidence="39">
    <original>R</original>
    <variation>Q</variation>
    <location>
        <position position="224"/>
    </location>
</feature>
<feature type="sequence variant" id="VAR_029026" description="In POMPE; infantile; mild partial loss of activity; dbSNP:rs757700700." evidence="14 15 29">
    <original>R</original>
    <variation>W</variation>
    <location>
        <position position="224"/>
    </location>
</feature>
<feature type="sequence variant" id="VAR_068576" description="In POMPE." evidence="39 40">
    <original>T</original>
    <variation>K</variation>
    <location>
        <position position="234"/>
    </location>
</feature>
<feature type="sequence variant" id="VAR_068577" description="In POMPE." evidence="39">
    <original>T</original>
    <variation>R</variation>
    <location>
        <position position="234"/>
    </location>
</feature>
<feature type="sequence variant" id="VAR_029027" description="In POMPE; uncertain significance; dbSNP:rs121907944." evidence="19">
    <original>A</original>
    <variation>V</variation>
    <location>
        <position position="237"/>
    </location>
</feature>
<feature type="sequence variant" id="VAR_068578" description="In POMPE; dbSNP:rs200856561." evidence="34">
    <original>S</original>
    <variation>L</variation>
    <location>
        <position position="251"/>
    </location>
</feature>
<feature type="sequence variant" id="VAR_068579" description="In POMPE; dbSNP:rs577915581." evidence="34">
    <original>S</original>
    <variation>L</variation>
    <location>
        <position position="254"/>
    </location>
</feature>
<feature type="sequence variant" id="VAR_029028" description="In POMPE; infantile; severe; dbSNP:rs201896815." evidence="11 29 34">
    <original>E</original>
    <variation>K</variation>
    <location>
        <position position="262"/>
    </location>
</feature>
<feature type="sequence variant" id="VAR_068580" description="In POMPE; dbSNP:rs1555599667." evidence="34">
    <original>P</original>
    <variation>S</variation>
    <location>
        <position position="266"/>
    </location>
</feature>
<feature type="sequence variant" id="VAR_068581" evidence="34">
    <original>T</original>
    <variation>A</variation>
    <location>
        <position position="271"/>
    </location>
</feature>
<feature type="sequence variant" id="VAR_018080" description="In POMPE; juvenile form; mild; partial loss of activity; dbSNP:rs764622267." evidence="16">
    <original>P</original>
    <variation>R</variation>
    <location>
        <position position="285"/>
    </location>
</feature>
<feature type="sequence variant" id="VAR_068582" description="In POMPE; dbSNP:rs886042086." evidence="28">
    <original>P</original>
    <variation>S</variation>
    <location>
        <position position="285"/>
    </location>
</feature>
<feature type="sequence variant" id="VAR_068583" description="In POMPE; uncertain significance; dbSNP:rs552929702." evidence="39">
    <original>N</original>
    <variation>D</variation>
    <location>
        <position position="290"/>
    </location>
</feature>
<feature type="sequence variant" id="VAR_068584" description="In POMPE; dbSNP:rs773417785." evidence="28">
    <original>L</original>
    <variation>F</variation>
    <location>
        <position position="291"/>
    </location>
</feature>
<feature type="sequence variant" id="VAR_068585" description="In POMPE." evidence="28 34">
    <original>L</original>
    <variation>P</variation>
    <location>
        <position position="291"/>
    </location>
</feature>
<feature type="sequence variant" id="VAR_018081" description="In POMPE; juvenile form; mild; partial loss of activity; dbSNP:rs1057516600." evidence="16">
    <original>Y</original>
    <variation>C</variation>
    <location>
        <position position="292"/>
    </location>
</feature>
<feature type="sequence variant" id="VAR_018082" description="In POMPE; infantile form; severe; almost complete loss of activity; dbSNP:rs121907945." evidence="16 19 29">
    <original>G</original>
    <variation>R</variation>
    <location>
        <position position="293"/>
    </location>
</feature>
<feature type="sequence variant" id="VAR_004288" description="In POMPE; infantile form; dbSNP:rs121907940." evidence="46">
    <original>L</original>
    <variation>R</variation>
    <location>
        <position position="299"/>
    </location>
</feature>
<feature type="sequence variant" id="VAR_046468" description="In POMPE." evidence="10">
    <original>H</original>
    <variation>L</variation>
    <location>
        <position position="308"/>
    </location>
</feature>
<feature type="sequence variant" id="VAR_018083" description="In POMPE; infantile form; severe; complete loss of activity." evidence="16">
    <original>H</original>
    <variation>P</variation>
    <location>
        <position position="308"/>
    </location>
</feature>
<feature type="sequence variant" id="VAR_018084" description="In POMPE; severe; dbSNP:rs543300039." evidence="25 58">
    <original>G</original>
    <variation>R</variation>
    <location>
        <position position="309"/>
    </location>
</feature>
<feature type="sequence variant" id="VAR_068586" description="In POMPE; uncertain significance; dbSNP:rs763091901." evidence="39">
    <original>V</original>
    <variation>G</variation>
    <location>
        <position position="310"/>
    </location>
</feature>
<feature type="sequence variant" id="VAR_018085" description="In POMPE; infantile form; severe; loss of activity." evidence="16">
    <original>L</original>
    <variation>R</variation>
    <location>
        <position position="312"/>
    </location>
</feature>
<feature type="sequence variant" id="VAR_068587" description="In POMPE." evidence="39">
    <original>N</original>
    <variation>I</variation>
    <location>
        <position position="316"/>
    </location>
</feature>
<feature type="sequence variant" id="VAR_068588" description="In POMPE." evidence="28">
    <original>M</original>
    <variation>K</variation>
    <location>
        <position position="318"/>
    </location>
</feature>
<feature type="sequence variant" id="VAR_004289" description="In POMPE; severe; dbSNP:rs121907936." evidence="22">
    <original>M</original>
    <variation>T</variation>
    <location>
        <position position="318"/>
    </location>
</feature>
<feature type="sequence variant" id="VAR_029029" description="In POMPE; uncertain significance; dbSNP:rs750030887." evidence="10">
    <original>P</original>
    <variation>L</variation>
    <location>
        <position position="324"/>
    </location>
</feature>
<feature type="sequence variant" id="VAR_029030" description="In POMPE; infantile form; severe." evidence="23">
    <original>W</original>
    <variation>G</variation>
    <location>
        <position position="330"/>
    </location>
</feature>
<feature type="sequence variant" id="VAR_068589" description="In POMPE; dbSNP:rs730880022." evidence="39">
    <original>G</original>
    <variation>E</variation>
    <location>
        <position position="335"/>
    </location>
</feature>
<feature type="sequence variant" id="VAR_068590" description="In POMPE; dbSNP:rs202095215." evidence="28">
    <original>G</original>
    <variation>R</variation>
    <location>
        <position position="335"/>
    </location>
</feature>
<feature type="sequence variant" id="VAR_068591" description="In POMPE." evidence="28">
    <original>P</original>
    <variation>R</variation>
    <location>
        <position position="347"/>
    </location>
</feature>
<feature type="sequence variant" id="VAR_018086" description="In POMPE; infantile form; severe; loss of activity; dbSNP:rs766074609." evidence="16 17 25 26 29">
    <original>L</original>
    <variation>P</variation>
    <location>
        <position position="355"/>
    </location>
</feature>
<feature type="sequence variant" id="VAR_068592" evidence="26">
    <original>G</original>
    <variation>R</variation>
    <location>
        <position position="359"/>
    </location>
</feature>
<feature type="sequence variant" id="VAR_029031" description="In POMPE; juvenile form; severe; dbSNP:rs755253527." evidence="12 25 39">
    <original>P</original>
    <variation>L</variation>
    <location>
        <position position="361"/>
    </location>
</feature>
<feature type="sequence variant" id="VAR_018087" description="In POMPE; infantile form; severe; loss of activity." evidence="16">
    <original>C</original>
    <variation>R</variation>
    <location>
        <position position="374"/>
    </location>
</feature>
<feature type="sequence variant" id="VAR_046469" description="In POMPE; extremely low residual enzymatic activity; dbSNP:rs142752477." evidence="29">
    <original>R</original>
    <variation>L</variation>
    <location>
        <position position="375"/>
    </location>
</feature>
<feature type="sequence variant" id="VAR_029032" description="In POMPE; severe; dbSNP:rs752002666.">
    <original>G</original>
    <variation>R</variation>
    <location>
        <position position="377"/>
    </location>
</feature>
<feature type="sequence variant" id="VAR_068593" description="In POMPE; uncertain significance; dbSNP:rs778634337." evidence="39 42">
    <original>M</original>
    <variation>V</variation>
    <location>
        <position position="391"/>
    </location>
</feature>
<feature type="sequence variant" id="VAR_068594" description="In POMPE; uncertain significance; dbSNP:rs776008078." evidence="39">
    <original>P</original>
    <variation>L</variation>
    <location>
        <position position="397"/>
    </location>
</feature>
<feature type="sequence variant" id="VAR_046470" description="In POMPE; extremely low residual enzymatic activity." evidence="29">
    <original>Q</original>
    <variation>R</variation>
    <location>
        <position position="401"/>
    </location>
</feature>
<feature type="sequence variant" id="VAR_004290" description="In POMPE; severe.">
    <original>W</original>
    <variation>R</variation>
    <location>
        <position position="402"/>
    </location>
</feature>
<feature type="sequence variant" id="VAR_029033" description="In POMPE; severe; dbSNP:rs141533320." evidence="21">
    <original>D</original>
    <variation>N</variation>
    <location>
        <position position="404"/>
    </location>
</feature>
<feature type="sequence variant" id="VAR_018088" description="In POMPE; infantile form; severe; loss of activity." evidence="16">
    <original>L</original>
    <variation>P</variation>
    <location>
        <position position="405"/>
    </location>
</feature>
<feature type="sequence variant" id="VAR_029034" description="In POMPE; juvenile form; severe; dbSNP:rs560575383." evidence="11 34">
    <original>M</original>
    <variation>V</variation>
    <location>
        <position position="408"/>
    </location>
</feature>
<feature type="sequence variant" id="VAR_068595" description="In POMPE." evidence="39">
    <original>D</original>
    <variation>V</variation>
    <location>
        <position position="419"/>
    </location>
</feature>
<feature type="sequence variant" id="VAR_070017" description="In POMPE." evidence="40">
    <location>
        <begin position="431"/>
        <end position="433"/>
    </location>
</feature>
<feature type="sequence variant" id="VAR_029035" description="In POMPE; juvenile form; severe; dbSNP:rs770610356." evidence="12">
    <original>R</original>
    <variation>C</variation>
    <location>
        <position position="437"/>
    </location>
</feature>
<feature type="sequence variant" id="VAR_074277" description="In POMPE; uncertain significance; dbSNP:rs150868652." evidence="42">
    <original>R</original>
    <variation>H</variation>
    <location>
        <position position="437"/>
    </location>
</feature>
<feature type="sequence variant" id="VAR_029036" description="In POMPE." evidence="25">
    <original>A</original>
    <variation>P</variation>
    <location>
        <position position="445"/>
    </location>
</feature>
<feature type="sequence variant" id="VAR_018089" description="In POMPE; juvenile form; almost complete loss of activity." evidence="16">
    <original>Y</original>
    <variation>F</variation>
    <location>
        <position position="455"/>
    </location>
</feature>
<feature type="sequence variant" id="VAR_068596" description="In POMPE." evidence="39">
    <original>P</original>
    <variation>H</variation>
    <location>
        <position position="457"/>
    </location>
</feature>
<feature type="sequence variant" id="VAR_029040" description="In POMPE; juvenile form." evidence="60">
    <original>P</original>
    <variation>L</variation>
    <location>
        <position position="457"/>
    </location>
</feature>
<feature type="sequence variant" id="VAR_068597" description="In dbSNP:rs1358826817." evidence="39">
    <original>Y</original>
    <variation>C</variation>
    <location>
        <position position="458"/>
    </location>
</feature>
<feature type="sequence variant" id="VAR_018090" description="In POMPE; infantile form; severe." evidence="16">
    <location>
        <position position="459"/>
    </location>
</feature>
<feature type="sequence variant" id="VAR_004291" description="In POMPE; severe; loss of activity; dbSNP:rs778068209." evidence="16 34">
    <original>G</original>
    <variation>R</variation>
    <location>
        <position position="478"/>
    </location>
</feature>
<feature type="sequence variant" id="VAR_004292" description="In POMPE; severe; loss of activity; dbSNP:rs772883420." evidence="6 16">
    <original>W</original>
    <variation>R</variation>
    <location>
        <position position="481"/>
    </location>
</feature>
<feature type="sequence variant" id="VAR_068598" description="In POMPE." evidence="28">
    <original>P</original>
    <variation>R</variation>
    <location>
        <position position="482"/>
    </location>
</feature>
<feature type="sequence variant" id="VAR_068599" description="In POMPE." evidence="28">
    <original>G</original>
    <variation>V</variation>
    <location>
        <position position="483"/>
    </location>
</feature>
<feature type="sequence variant" id="VAR_068600" description="In POMPE." evidence="33">
    <original>A</original>
    <variation>P</variation>
    <location>
        <position position="486"/>
    </location>
</feature>
<feature type="sequence variant" id="VAR_029037" description="In POMPE; severe; dbSNP:rs398123169." evidence="25 29">
    <original>D</original>
    <variation>N</variation>
    <location>
        <position position="489"/>
    </location>
</feature>
<feature type="sequence variant" id="VAR_004293" description="In POMPE; severe; loss of activity; dbSNP:rs786204720." evidence="16">
    <original>M</original>
    <variation>T</variation>
    <location>
        <position position="519"/>
    </location>
</feature>
<feature type="sequence variant" id="VAR_004294" description="In POMPE." evidence="47">
    <original>M</original>
    <variation>V</variation>
    <location>
        <position position="519"/>
    </location>
</feature>
<feature type="sequence variant" id="VAR_004295" description="In POMPE; severe; dbSNP:rs121907937." evidence="31">
    <original>E</original>
    <variation>K</variation>
    <location>
        <position position="521"/>
    </location>
</feature>
<feature type="sequence variant" id="VAR_068601" description="In POMPE." evidence="28">
    <original>E</original>
    <variation>Q</variation>
    <location>
        <position position="521"/>
    </location>
</feature>
<feature type="sequence variant" id="VAR_046471" description="In POMPE; no residual enzymatic activity; dbSNP:rs1057517146." evidence="26 29">
    <original>P</original>
    <variation>A</variation>
    <location>
        <position position="522"/>
    </location>
</feature>
<feature type="sequence variant" id="VAR_068602" description="In POMPE; dbSNP:rs892129065." evidence="28">
    <original>P</original>
    <variation>S</variation>
    <location>
        <position position="522"/>
    </location>
</feature>
<feature type="sequence variant" id="VAR_068603" description="In POMPE." evidence="39">
    <original>S</original>
    <variation>Y</variation>
    <location>
        <position position="523"/>
    </location>
</feature>
<feature type="sequence variant" id="VAR_068604" description="In POMPE." evidence="34">
    <original>F</original>
    <variation>Y</variation>
    <location>
        <position position="525"/>
    </location>
</feature>
<feature type="sequence variant" id="VAR_004296" description="In POMPE; mild; requires 2 nucleotide substitutions; dbSNP:rs121907941." evidence="54">
    <original>S</original>
    <variation>V</variation>
    <location>
        <position position="529"/>
    </location>
</feature>
<feature type="sequence variant" id="VAR_004297" description="In POMPE; mild; partial loss of activity; dbSNP:rs121907942." evidence="9 16 34 48">
    <original>P</original>
    <variation>L</variation>
    <location>
        <position position="545"/>
    </location>
</feature>
<feature type="sequence variant" id="VAR_018091" description="In POMPE; juvenile form; mild; partial loss of activity." evidence="16 25">
    <original>G</original>
    <variation>R</variation>
    <location>
        <position position="549"/>
    </location>
</feature>
<feature type="sequence variant" id="VAR_018092" description="In POMPE; infantile/juvenile form; severe; loss of activity; dbSNP:rs779556619." evidence="16 29 42">
    <original>L</original>
    <variation>P</variation>
    <location>
        <position position="552"/>
    </location>
</feature>
<feature type="sequence variant" id="VAR_068605" description="In POMPE; dbSNP:rs747150965." evidence="34">
    <original>I</original>
    <variation>F</variation>
    <location>
        <position position="557"/>
    </location>
</feature>
<feature type="sequence variant" id="VAR_068606" description="In POMPE." evidence="35 39">
    <original>C</original>
    <variation>S</variation>
    <location>
        <position position="558"/>
    </location>
</feature>
<feature type="sequence variant" id="VAR_004298" description="In POMPE; infantile form." evidence="56">
    <original>S</original>
    <variation>P</variation>
    <location>
        <position position="566"/>
    </location>
</feature>
<feature type="sequence variant" id="VAR_070018" description="In POMPE." evidence="40">
    <original>H</original>
    <variation>L</variation>
    <location>
        <position position="568"/>
    </location>
</feature>
<feature type="sequence variant" id="VAR_068607" description="In POMPE; dbSNP:rs765362308." evidence="28">
    <original>N</original>
    <variation>K</variation>
    <location>
        <position position="570"/>
    </location>
</feature>
<feature type="sequence variant" id="VAR_068608" description="In POMPE; dbSNP:rs772962666." evidence="28">
    <original>H</original>
    <variation>Q</variation>
    <location>
        <position position="572"/>
    </location>
</feature>
<feature type="sequence variant" id="VAR_068609" description="In POMPE." evidence="39">
    <original>Y</original>
    <variation>C</variation>
    <location>
        <position position="575"/>
    </location>
</feature>
<feature type="sequence variant" id="VAR_018093" description="In POMPE; juvenile form." evidence="16">
    <original>Y</original>
    <variation>S</variation>
    <location>
        <position position="575"/>
    </location>
</feature>
<feature type="sequence variant" id="VAR_004299">
    <original>G</original>
    <variation>A</variation>
    <location>
        <position position="576"/>
    </location>
</feature>
<feature type="sequence variant" id="VAR_068610" description="In POMPE." evidence="39">
    <original>G</original>
    <variation>R</variation>
    <location>
        <position position="576"/>
    </location>
</feature>
<feature type="sequence variant" id="VAR_004300" description="Retains about half of the activity compared with the wild-type; dbSNP:rs1800307." evidence="15 42">
    <original>G</original>
    <variation>S</variation>
    <location>
        <position position="576"/>
    </location>
</feature>
<feature type="sequence variant" id="VAR_018094" description="In POMPE; infantile form; severe; loss of activity; dbSNP:rs991082382." evidence="16">
    <original>E</original>
    <variation>K</variation>
    <location>
        <position position="579"/>
    </location>
</feature>
<feature type="sequence variant" id="VAR_068611" description="In dbSNP:rs747373179." evidence="28">
    <original>R</original>
    <variation>K</variation>
    <location>
        <position position="585"/>
    </location>
</feature>
<feature type="sequence variant" id="VAR_046472" description="In POMPE." evidence="10">
    <original>R</original>
    <variation>M</variation>
    <location>
        <position position="585"/>
    </location>
</feature>
<feature type="sequence variant" id="VAR_068612" description="In POMPE; dbSNP:rs775450536." evidence="39">
    <original>R</original>
    <variation>H</variation>
    <location>
        <position position="594"/>
    </location>
</feature>
<feature type="sequence variant" id="VAR_068613" description="In POMPE; dbSNP:rs775450536." evidence="28 33">
    <original>R</original>
    <variation>P</variation>
    <location>
        <position position="594"/>
    </location>
</feature>
<feature type="sequence variant" id="VAR_046473" description="In POMPE; no residual enzymatic activity; dbSNP:rs753505203." evidence="29">
    <original>S</original>
    <variation>Y</variation>
    <location>
        <position position="599"/>
    </location>
</feature>
<feature type="sequence variant" id="VAR_018095" description="In POMPE; juvenile form; loss of activity; dbSNP:rs764670084." evidence="15 16">
    <original>R</original>
    <variation>C</variation>
    <location>
        <position position="600"/>
    </location>
</feature>
<feature type="sequence variant" id="VAR_008689" description="In POMPE; infantile form; dbSNP:rs377544304." evidence="8">
    <original>R</original>
    <variation>H</variation>
    <location>
        <position position="600"/>
    </location>
</feature>
<feature type="sequence variant" id="VAR_068614" description="In POMPE; dbSNP:rs374470794." evidence="39 40">
    <original>S</original>
    <variation>L</variation>
    <location>
        <position position="601"/>
    </location>
</feature>
<feature type="sequence variant" id="VAR_068615" description="In POMPE; dbSNP:rs781484283." evidence="39">
    <original>T</original>
    <variation>A</variation>
    <location>
        <position position="602"/>
    </location>
</feature>
<feature type="sequence variant" id="VAR_046474" description="In POMPE." evidence="10">
    <location>
        <begin position="607"/>
        <end position="612"/>
    </location>
</feature>
<feature type="sequence variant" id="VAR_018096" description="In POMPE; infantile form; severe; loss of activity; dbSNP:rs1393386120." evidence="16">
    <original>G</original>
    <variation>D</variation>
    <location>
        <position position="607"/>
    </location>
</feature>
<feature type="sequence variant" id="VAR_068616" description="In POMPE." evidence="26">
    <original>A</original>
    <variation>V</variation>
    <location>
        <position position="610"/>
    </location>
</feature>
<feature type="sequence variant" id="VAR_068617" description="In POMPE; dbSNP:rs1057517105." evidence="39 42">
    <original>G</original>
    <variation>D</variation>
    <location>
        <position position="611"/>
    </location>
</feature>
<feature type="sequence variant" id="VAR_029038" description="In POMPE; dbSNP:rs768397968." evidence="25">
    <original>H</original>
    <variation>Q</variation>
    <location>
        <position position="612"/>
    </location>
</feature>
<feature type="sequence variant" id="VAR_068618" description="In POMPE." evidence="33">
    <original>H</original>
    <variation>Y</variation>
    <location>
        <position position="612"/>
    </location>
</feature>
<feature type="sequence variant" id="VAR_068619" description="In POMPE; dbSNP:rs369531647." evidence="28">
    <original>T</original>
    <variation>K</variation>
    <location>
        <position position="614"/>
    </location>
</feature>
<feature type="sequence variant" id="VAR_008690" description="In POMPE; infantile/adult form; dbSNP:rs549029029." evidence="34">
    <original>G</original>
    <variation>R</variation>
    <location>
        <position position="615"/>
    </location>
</feature>
<feature type="sequence variant" id="VAR_046475" description="In POMPE; loss of function of the mutant enzyme; dbSNP:rs914396317." evidence="15">
    <original>S</original>
    <variation>R</variation>
    <location>
        <position position="619"/>
    </location>
</feature>
<feature type="sequence variant" id="VAR_068620" description="In POMPE." evidence="39">
    <original>S</original>
    <variation>P</variation>
    <location>
        <position position="627"/>
    </location>
</feature>
<feature type="sequence variant" id="VAR_068621" description="In dbSNP:rs746961289." evidence="39">
    <original>P</original>
    <variation>L</variation>
    <location>
        <position position="629"/>
    </location>
</feature>
<feature type="sequence variant" id="VAR_068622" description="In POMPE; dbSNP:rs1414146587." evidence="33">
    <original>N</original>
    <variation>K</variation>
    <location>
        <position position="635"/>
    </location>
</feature>
<feature type="sequence variant" id="VAR_068623" description="In POMPE." evidence="33">
    <original>G</original>
    <variation>V</variation>
    <location>
        <position position="638"/>
    </location>
</feature>
<feature type="sequence variant" id="VAR_046476" description="In POMPE; dbSNP:rs757617999." evidence="9 29">
    <original>G</original>
    <variation>W</variation>
    <location>
        <position position="638"/>
    </location>
</feature>
<feature type="sequence variant" id="VAR_074278" description="In POMPE; uncertain significance; dbSNP:rs1420043899." evidence="42">
    <original>L</original>
    <variation>V</variation>
    <location>
        <position position="641"/>
    </location>
</feature>
<feature type="sequence variant" id="VAR_004301" description="In POMPE; infantile form; dbSNP:rs28937909." evidence="10 25 29 51 56">
    <original>G</original>
    <variation>R</variation>
    <location>
        <position position="643"/>
    </location>
</feature>
<feature type="sequence variant" id="VAR_004302" description="In POMPE; infantile form; most common mutation; deficient in phosphorylation and in proteolytic processing; dbSNP:rs28940868." evidence="24 34 50">
    <original>D</original>
    <variation>E</variation>
    <location>
        <position position="645"/>
    </location>
</feature>
<feature type="sequence variant" id="VAR_004303" description="In POMPE; almost complete loss of activity; dbSNP:rs368438393." evidence="45">
    <original>D</original>
    <variation>H</variation>
    <location>
        <position position="645"/>
    </location>
</feature>
<feature type="sequence variant" id="VAR_004304" description="In POMPE; dbSNP:rs368438393." evidence="18 29 57">
    <original>D</original>
    <variation>N</variation>
    <location>
        <position position="645"/>
    </location>
</feature>
<feature type="sequence variant" id="VAR_004305" description="In POMPE; dbSNP:rs776948121." evidence="42 49 57">
    <original>C</original>
    <variation>W</variation>
    <location>
        <position position="647"/>
    </location>
</feature>
<feature type="sequence variant" id="VAR_068624" description="In POMPE; dbSNP:rs1448515860." evidence="39">
    <original>G</original>
    <variation>D</variation>
    <location>
        <position position="648"/>
    </location>
</feature>
<feature type="sequence variant" id="VAR_004306" description="In POMPE; dbSNP:rs536906561." evidence="57">
    <original>G</original>
    <variation>S</variation>
    <location>
        <position position="648"/>
    </location>
</feature>
<feature type="sequence variant" id="VAR_046477" description="In POMPE; loss of function of the mutant enzyme; dbSNP:rs374143224." evidence="15">
    <original>R</original>
    <variation>H</variation>
    <location>
        <position position="660"/>
    </location>
</feature>
<feature type="sequence variant" id="VAR_004307" description="In POMPE; dbSNP:rs778418246." evidence="57">
    <original>R</original>
    <variation>Q</variation>
    <location>
        <position position="672"/>
    </location>
</feature>
<feature type="sequence variant" id="VAR_046478" description="In POMPE." evidence="10">
    <original>R</original>
    <variation>T</variation>
    <location>
        <position position="672"/>
    </location>
</feature>
<feature type="sequence variant" id="VAR_004308" description="In POMPE; dbSNP:rs757111744." evidence="25 57">
    <original>R</original>
    <variation>W</variation>
    <location>
        <position position="672"/>
    </location>
</feature>
<feature type="sequence variant" id="VAR_008692" description="In POMPE; infantile form." evidence="8">
    <location>
        <position position="675"/>
    </location>
</feature>
<feature type="sequence variant" id="VAR_004309" description="In allele GAA*4; dbSNP:rs1800309." evidence="42 55">
    <original>E</original>
    <variation>K</variation>
    <location>
        <position position="689"/>
    </location>
</feature>
<feature type="sequence variant" id="VAR_068625" description="In POMPE; uncertain significance." evidence="39">
    <location>
        <begin position="700"/>
        <end position="701"/>
    </location>
</feature>
<feature type="sequence variant" id="VAR_046479" description="In POMPE; no enzymatic activity; shows enzyme localization primarily in the ER-Golgi compartment suggesting that mutation could affect the normal processing and stability of the enzyme; dbSNP:rs786204645." evidence="17">
    <original>R</original>
    <variation>C</variation>
    <location>
        <position position="702"/>
    </location>
</feature>
<feature type="sequence variant" id="VAR_068626" description="In POMPE; dbSNP:rs398123172." evidence="39">
    <original>R</original>
    <variation>L</variation>
    <location>
        <position position="702"/>
    </location>
</feature>
<feature type="sequence variant" id="VAR_074279" description="In POMPE; uncertain significance." evidence="42">
    <original>L</original>
    <variation>P</variation>
    <location>
        <position position="705"/>
    </location>
</feature>
<feature type="sequence variant" id="VAR_068627" description="In POMPE; uncertain significance; dbSNP:rs759292700." evidence="34">
    <original>T</original>
    <variation>R</variation>
    <location>
        <position position="711"/>
    </location>
</feature>
<feature type="sequence variant" id="VAR_068628" description="In dbSNP:rs141017311." evidence="39">
    <original>V</original>
    <variation>I</variation>
    <location>
        <position position="718"/>
    </location>
</feature>
<feature type="sequence variant" id="VAR_004310" description="In POMPE; adult form; dbSNP:rs121907938." evidence="51">
    <original>R</original>
    <variation>W</variation>
    <location>
        <position position="725"/>
    </location>
</feature>
<feature type="sequence variant" id="VAR_068629" description="In POMPE; dbSNP:rs1381005435." evidence="28">
    <original>T</original>
    <variation>N</variation>
    <location>
        <position position="737"/>
    </location>
</feature>
<feature type="sequence variant" id="VAR_068630" description="In POMPE." evidence="39">
    <original>Q</original>
    <variation>K</variation>
    <location>
        <position position="743"/>
    </location>
</feature>
<feature type="sequence variant" id="VAR_004311" description="In POMPE; dbSNP:rs1800312." evidence="25 34">
    <original>W</original>
    <variation>C</variation>
    <location>
        <position position="746"/>
    </location>
</feature>
<feature type="sequence variant" id="VAR_068631" description="In POMPE; dbSNP:rs1479740763." evidence="34">
    <original>W</original>
    <variation>G</variation>
    <location>
        <position position="746"/>
    </location>
</feature>
<feature type="sequence variant" id="VAR_068632" description="In POMPE; dbSNP:rs752921215." evidence="28">
    <original>W</original>
    <variation>S</variation>
    <location>
        <position position="746"/>
    </location>
</feature>
<feature type="sequence variant" id="VAR_070019" description="In POMPE; dbSNP:rs144016984." evidence="40">
    <original>Y</original>
    <variation>C</variation>
    <location>
        <position position="766"/>
    </location>
</feature>
<feature type="sequence variant" id="VAR_004312" description="In POMPE; infantile form." evidence="56">
    <original>P</original>
    <variation>R</variation>
    <location>
        <position position="768"/>
    </location>
</feature>
<feature type="sequence variant" id="VAR_004313" description="In dbSNP:rs1126690." evidence="37 41 42 44 46 60">
    <original>V</original>
    <variation>I</variation>
    <location>
        <position position="780"/>
    </location>
</feature>
<feature type="sequence variant" id="VAR_004314" description="In dbSNP:rs1800314." evidence="24 42 50 53">
    <original>V</original>
    <variation>I</variation>
    <location>
        <position position="816"/>
    </location>
</feature>
<feature type="sequence variant" id="VAR_068633" description="In POMPE." evidence="39">
    <original>R</original>
    <variation>P</variation>
    <location>
        <position position="819"/>
    </location>
</feature>
<feature type="sequence variant" id="VAR_018097" description="In POMPE; infantile form; severe; loss of activity." evidence="16">
    <original>A</original>
    <variation>D</variation>
    <location>
        <position position="880"/>
    </location>
</feature>
<feature type="sequence variant" id="VAR_029039" description="In POMPE; infantile form; severe." evidence="18">
    <original>L</original>
    <variation>Q</variation>
    <location>
        <position position="901"/>
    </location>
</feature>
<feature type="sequence variant" id="VAR_004315" description="In POMPE; infantile form; severe; loss of activity." evidence="46">
    <location>
        <position position="903"/>
    </location>
</feature>
<feature type="sequence variant" id="VAR_070020" description="In POMPE; dbSNP:rs1480070037." evidence="40">
    <original>P</original>
    <variation>R</variation>
    <location>
        <position position="913"/>
    </location>
</feature>
<feature type="sequence variant" id="VAR_068634" description="In POMPE; dbSNP:rs1221948995." evidence="39">
    <original>V</original>
    <variation>F</variation>
    <location>
        <position position="916"/>
    </location>
</feature>
<feature type="sequence variant" id="VAR_004316" description="In POMPE." evidence="7">
    <original>N</original>
    <variation>NGVPVSN</variation>
    <location>
        <position position="925"/>
    </location>
</feature>
<feature type="sequence variant" id="VAR_004317" description="Loss of glycosylation site; dbSNP:rs1800315." evidence="24 50 53">
    <original>T</original>
    <variation>I</variation>
    <location>
        <position position="927"/>
    </location>
</feature>
<feature type="sequence variant" id="VAR_068635" description="In POMPE." evidence="28">
    <original>L</original>
    <variation>P</variation>
    <location>
        <position position="935"/>
    </location>
</feature>
<feature type="sequence variant" id="VAR_004318" description="In POMPE; dbSNP:rs1245412108.">
    <original>V</original>
    <variation>D</variation>
    <location>
        <position position="949"/>
    </location>
</feature>
<feature type="mutagenesis site" description="Loss of activity." evidence="30">
    <original>W</original>
    <variation>R</variation>
    <location>
        <position position="516"/>
    </location>
</feature>
<feature type="mutagenesis site" description="Loss of activity." evidence="30">
    <original>D</original>
    <variation>G</variation>
    <variation>N</variation>
    <variation>E</variation>
    <location>
        <position position="518"/>
    </location>
</feature>
<feature type="helix" evidence="70">
    <location>
        <begin position="80"/>
        <end position="82"/>
    </location>
</feature>
<feature type="helix" evidence="72">
    <location>
        <begin position="86"/>
        <end position="88"/>
    </location>
</feature>
<feature type="strand" evidence="71">
    <location>
        <begin position="94"/>
        <end position="96"/>
    </location>
</feature>
<feature type="helix" evidence="72">
    <location>
        <begin position="100"/>
        <end position="105"/>
    </location>
</feature>
<feature type="strand" evidence="72">
    <location>
        <begin position="126"/>
        <end position="128"/>
    </location>
</feature>
<feature type="strand" evidence="72">
    <location>
        <begin position="137"/>
        <end position="143"/>
    </location>
</feature>
<feature type="strand" evidence="72">
    <location>
        <begin position="145"/>
        <end position="153"/>
    </location>
</feature>
<feature type="strand" evidence="72">
    <location>
        <begin position="159"/>
        <end position="163"/>
    </location>
</feature>
<feature type="strand" evidence="72">
    <location>
        <begin position="166"/>
        <end position="173"/>
    </location>
</feature>
<feature type="strand" evidence="72">
    <location>
        <begin position="175"/>
        <end position="184"/>
    </location>
</feature>
<feature type="strand" evidence="72">
    <location>
        <begin position="208"/>
        <end position="214"/>
    </location>
</feature>
<feature type="turn" evidence="72">
    <location>
        <begin position="215"/>
        <end position="218"/>
    </location>
</feature>
<feature type="strand" evidence="72">
    <location>
        <begin position="219"/>
        <end position="224"/>
    </location>
</feature>
<feature type="turn" evidence="72">
    <location>
        <begin position="225"/>
        <end position="227"/>
    </location>
</feature>
<feature type="strand" evidence="72">
    <location>
        <begin position="230"/>
        <end position="233"/>
    </location>
</feature>
<feature type="helix" evidence="72">
    <location>
        <begin position="234"/>
        <end position="236"/>
    </location>
</feature>
<feature type="strand" evidence="72">
    <location>
        <begin position="240"/>
        <end position="242"/>
    </location>
</feature>
<feature type="strand" evidence="72">
    <location>
        <begin position="245"/>
        <end position="251"/>
    </location>
</feature>
<feature type="strand" evidence="72">
    <location>
        <begin position="253"/>
        <end position="255"/>
    </location>
</feature>
<feature type="strand" evidence="72">
    <location>
        <begin position="257"/>
        <end position="259"/>
    </location>
</feature>
<feature type="strand" evidence="72">
    <location>
        <begin position="272"/>
        <end position="278"/>
    </location>
</feature>
<feature type="strand" evidence="72">
    <location>
        <begin position="297"/>
        <end position="301"/>
    </location>
</feature>
<feature type="strand" evidence="72">
    <location>
        <begin position="307"/>
        <end position="312"/>
    </location>
</feature>
<feature type="strand" evidence="72">
    <location>
        <begin position="318"/>
        <end position="323"/>
    </location>
</feature>
<feature type="turn" evidence="72">
    <location>
        <begin position="324"/>
        <end position="326"/>
    </location>
</feature>
<feature type="strand" evidence="72">
    <location>
        <begin position="327"/>
        <end position="335"/>
    </location>
</feature>
<feature type="strand" evidence="72">
    <location>
        <begin position="337"/>
        <end position="342"/>
    </location>
</feature>
<feature type="helix" evidence="72">
    <location>
        <begin position="347"/>
        <end position="358"/>
    </location>
</feature>
<feature type="helix" evidence="72">
    <location>
        <begin position="366"/>
        <end position="369"/>
    </location>
</feature>
<feature type="helix" evidence="72">
    <location>
        <begin position="381"/>
        <end position="393"/>
    </location>
</feature>
<feature type="strand" evidence="72">
    <location>
        <begin position="399"/>
        <end position="403"/>
    </location>
</feature>
<feature type="helix" evidence="72">
    <location>
        <begin position="405"/>
        <end position="407"/>
    </location>
</feature>
<feature type="turn" evidence="72">
    <location>
        <begin position="420"/>
        <end position="423"/>
    </location>
</feature>
<feature type="helix" evidence="72">
    <location>
        <begin position="424"/>
        <end position="433"/>
    </location>
</feature>
<feature type="strand" evidence="72">
    <location>
        <begin position="437"/>
        <end position="442"/>
    </location>
</feature>
<feature type="helix" evidence="72">
    <location>
        <begin position="456"/>
        <end position="464"/>
    </location>
</feature>
<feature type="strand" evidence="72">
    <location>
        <begin position="473"/>
        <end position="475"/>
    </location>
</feature>
<feature type="strand" evidence="72">
    <location>
        <begin position="477"/>
        <end position="480"/>
    </location>
</feature>
<feature type="strand" evidence="72">
    <location>
        <begin position="483"/>
        <end position="486"/>
    </location>
</feature>
<feature type="helix" evidence="72">
    <location>
        <begin position="493"/>
        <end position="509"/>
    </location>
</feature>
<feature type="strand" evidence="72">
    <location>
        <begin position="514"/>
        <end position="517"/>
    </location>
</feature>
<feature type="turn" evidence="72">
    <location>
        <begin position="520"/>
        <end position="522"/>
    </location>
</feature>
<feature type="strand" evidence="72">
    <location>
        <begin position="525"/>
        <end position="528"/>
    </location>
</feature>
<feature type="turn" evidence="72">
    <location>
        <begin position="537"/>
        <end position="539"/>
    </location>
</feature>
<feature type="turn" evidence="72">
    <location>
        <begin position="552"/>
        <end position="555"/>
    </location>
</feature>
<feature type="strand" evidence="72">
    <location>
        <begin position="564"/>
        <end position="567"/>
    </location>
</feature>
<feature type="helix" evidence="72">
    <location>
        <begin position="568"/>
        <end position="571"/>
    </location>
</feature>
<feature type="helix" evidence="72">
    <location>
        <begin position="572"/>
        <end position="574"/>
    </location>
</feature>
<feature type="helix" evidence="72">
    <location>
        <begin position="575"/>
        <end position="591"/>
    </location>
</feature>
<feature type="strand" evidence="72">
    <location>
        <begin position="597"/>
        <end position="601"/>
    </location>
</feature>
<feature type="helix" evidence="72">
    <location>
        <begin position="606"/>
        <end position="608"/>
    </location>
</feature>
<feature type="strand" evidence="72">
    <location>
        <begin position="611"/>
        <end position="613"/>
    </location>
</feature>
<feature type="strand" evidence="72">
    <location>
        <begin position="618"/>
        <end position="620"/>
    </location>
</feature>
<feature type="helix" evidence="72">
    <location>
        <begin position="621"/>
        <end position="636"/>
    </location>
</feature>
<feature type="strand" evidence="72">
    <location>
        <begin position="641"/>
        <end position="643"/>
    </location>
</feature>
<feature type="strand" evidence="72">
    <location>
        <begin position="649"/>
        <end position="651"/>
    </location>
</feature>
<feature type="helix" evidence="72">
    <location>
        <begin position="655"/>
        <end position="665"/>
    </location>
</feature>
<feature type="strand" evidence="72">
    <location>
        <begin position="668"/>
        <end position="670"/>
    </location>
</feature>
<feature type="strand" evidence="73">
    <location>
        <begin position="677"/>
        <end position="679"/>
    </location>
</feature>
<feature type="helix" evidence="72">
    <location>
        <begin position="684"/>
        <end position="686"/>
    </location>
</feature>
<feature type="helix" evidence="72">
    <location>
        <begin position="689"/>
        <end position="704"/>
    </location>
</feature>
<feature type="helix" evidence="72">
    <location>
        <begin position="706"/>
        <end position="719"/>
    </location>
</feature>
<feature type="strand" evidence="72">
    <location>
        <begin position="723"/>
        <end position="725"/>
    </location>
</feature>
<feature type="helix" evidence="72">
    <location>
        <begin position="727"/>
        <end position="730"/>
    </location>
</feature>
<feature type="helix" evidence="72">
    <location>
        <begin position="735"/>
        <end position="737"/>
    </location>
</feature>
<feature type="strand" evidence="72">
    <location>
        <begin position="742"/>
        <end position="746"/>
    </location>
</feature>
<feature type="turn" evidence="72">
    <location>
        <begin position="747"/>
        <end position="749"/>
    </location>
</feature>
<feature type="strand" evidence="72">
    <location>
        <begin position="750"/>
        <end position="753"/>
    </location>
</feature>
<feature type="strand" evidence="72">
    <location>
        <begin position="761"/>
        <end position="767"/>
    </location>
</feature>
<feature type="strand" evidence="72">
    <location>
        <begin position="769"/>
        <end position="774"/>
    </location>
</feature>
<feature type="helix" evidence="72">
    <location>
        <begin position="775"/>
        <end position="777"/>
    </location>
</feature>
<feature type="strand" evidence="72">
    <location>
        <begin position="796"/>
        <end position="808"/>
    </location>
</feature>
<feature type="strand" evidence="72">
    <location>
        <begin position="815"/>
        <end position="819"/>
    </location>
</feature>
<feature type="strand" evidence="72">
    <location>
        <begin position="822"/>
        <end position="827"/>
    </location>
</feature>
<feature type="helix" evidence="72">
    <location>
        <begin position="833"/>
        <end position="836"/>
    </location>
</feature>
<feature type="strand" evidence="72">
    <location>
        <begin position="841"/>
        <end position="846"/>
    </location>
</feature>
<feature type="strand" evidence="72">
    <location>
        <begin position="853"/>
        <end position="859"/>
    </location>
</feature>
<feature type="helix" evidence="72">
    <location>
        <begin position="867"/>
        <end position="870"/>
    </location>
</feature>
<feature type="strand" evidence="72">
    <location>
        <begin position="874"/>
        <end position="881"/>
    </location>
</feature>
<feature type="strand" evidence="72">
    <location>
        <begin position="884"/>
        <end position="891"/>
    </location>
</feature>
<feature type="helix" evidence="72">
    <location>
        <begin position="894"/>
        <end position="896"/>
    </location>
</feature>
<feature type="strand" evidence="72">
    <location>
        <begin position="900"/>
        <end position="907"/>
    </location>
</feature>
<feature type="strand" evidence="72">
    <location>
        <begin position="916"/>
        <end position="918"/>
    </location>
</feature>
<feature type="strand" evidence="72">
    <location>
        <begin position="926"/>
        <end position="929"/>
    </location>
</feature>
<feature type="turn" evidence="72">
    <location>
        <begin position="930"/>
        <end position="933"/>
    </location>
</feature>
<feature type="strand" evidence="72">
    <location>
        <begin position="934"/>
        <end position="942"/>
    </location>
</feature>
<feature type="strand" evidence="72">
    <location>
        <begin position="948"/>
        <end position="951"/>
    </location>
</feature>
<gene>
    <name type="primary">GAA</name>
</gene>